<comment type="function">
    <text evidence="1 5 7 8 9 10 11 12 13 15 16 17 18 20 24 28 29">Orphan nuclear receptor that binds DNA as a monomer to the 5'-TCAAGGCCA-3' sequence and controls expression of target genes: regulates key biological processes, such as early embryonic development, cholesterol and bile acid synthesis pathways, as well as liver and pancreas morphogenesis (PubMed:16289203, PubMed:18410128, PubMed:21614002, PubMed:32433991, PubMed:38409506, PubMed:9786908). Ligand-binding causes conformational change which causes recruitment of coactivators, promoting target gene activation (PubMed:21614002). The specific ligand is unknown, but specific phospholipids, such as phosphatidylethanolamine, phosphatidylserine, dilauroyl phosphatidylcholine and diundecanoyl phosphatidylcholine can act as ligand in vitro (PubMed:15707893, PubMed:15723037, PubMed:15897460, PubMed:21614002, PubMed:22504882, PubMed:23737522, PubMed:26416531, PubMed:26553876). Acts as a pioneer transcription factor, which unwraps target DNA from histones and elicits local opening of closed chromatin (PubMed:38409506). Plays a central role during preimplantation stages of embryonic development (By similarity). Plays a minor role in zygotic genome activation (ZGA) by regulating a small set of two-cell stage genes (By similarity). Plays a major role in morula development (2-16 cells embryos) by acting as a master regulator at the 8-cell stage, controlling expression of lineage-specifying transcription factors and genes involved in mitosis, telomere maintenance and DNA repair (By similarity). Zygotic NR5A2 binds to both closed and open chromatin with other transcription factors, often at SINE B1/Alu repeats DNA elements, promoting chromatin accessibility at nearby regulatory regions (By similarity). Also involved in the epiblast stage of development and embryonic stem cell pluripotency, by promoting expression of POU5F1/OCT4 (PubMed:27984042). Regulates other processes later in development, such as formation of connective tissue in lower jaw and middle ear, neural stem cell differentiation, ovarian follicle development and Sertoli cell differentiation (By similarity). Involved in exocrine pancreas development and acinar cell differentiation (By similarity). Acts as an essential transcriptional regulator of lipid metabolism (PubMed:20159957). Key regulator of cholesterol 7-alpha-hydroxylase gene (CYP7A) expression in liver (PubMed:10359768). Also acts as a negative regulator of inflammation in different organs, such as, liver and pancreas (PubMed:20159957). Protects against intestinal inflammation via its ability to regulate glucocorticoid production (By similarity). Plays an anti-inflammatory role during the hepatic acute phase response by acting as a corepressor: inhibits the hepatic acute phase response by preventing dissociation of the N-Cor corepressor complex (PubMed:20159957). Acts as a regulator of immunity by promoting lymphocyte T-cell development, proliferation and effector functions (By similarity). Also involved in resolution of endoplasmic reticulum stress in the liver (By similarity).</text>
</comment>
<comment type="function">
    <molecule>Isoform 3</molecule>
    <text evidence="5">In constrast to isoform 1 and isoform 2, does not induce cholesterol 7-alpha-hydroxylase gene (CYP7A) promoter activity.</text>
</comment>
<comment type="function">
    <text evidence="6 29">(Microbial infection) Plays a crucial role for hepatitis B virus gene transcription and DNA replication. Mechanistically, synergistically cooperates with HNF1A to up-regulate the activity of one of the critical cis-elements in the hepatitis B virus genome enhancer II (ENII).</text>
</comment>
<comment type="activity regulation">
    <text evidence="19 23 26">Activated by synthetic agonists RR-RJW100, SR-RJW100, endo sulfamide compound 6N and GSK8470.</text>
</comment>
<comment type="subunit">
    <text evidence="1 6 7 8 9 10 12 14 15 17 18 19 21 23 24 25 26 27 28">Monomer; Binds DNA as a monomer (PubMed:16289203, PubMed:38409506). Interacts with nuclear receptor corepressors NR0B1 and NR0B2; repressing NR5A2 nuclear receptor activity (PubMed:15723037, PubMed:22504882, PubMed:26416531, PubMed:32433991). Interacts with nuclear receptor coactivators CTNNB1, PPARGC1A and NCOA2; interaction takes place following ligand-binding and promotes target gene activation (PubMed:15707893, PubMed:15897460, PubMed:22187462, PubMed:22504882, PubMed:26553876, PubMed:27694446, PubMed:28363985, PubMed:31419141, PubMed:32433991, PubMed:32631515, PubMed:33335203, PubMed:35503419). Interacts (when sumoylated) with GPS2; interaction with GPS2 onto hepatic acute phase protein promoters prevents N-Cor corepressor complex dissociation (PubMed:20159957). Interacts with HNF1A (PubMed:14728801). Interacts with GRIP1 (By similarity).</text>
</comment>
<comment type="interaction">
    <interactant intactId="EBI-781320">
        <id>O00482</id>
    </interactant>
    <interactant intactId="EBI-781301">
        <id>O60869</id>
        <label>EDF1</label>
    </interactant>
    <organismsDiffer>false</organismsDiffer>
    <experiments>2</experiments>
</comment>
<comment type="interaction">
    <interactant intactId="EBI-15960777">
        <id>O00482-1</id>
    </interactant>
    <interactant intactId="EBI-491549">
        <id>P35222</id>
        <label>CTNNB1</label>
    </interactant>
    <organismsDiffer>false</organismsDiffer>
    <experiments>5</experiments>
</comment>
<comment type="interaction">
    <interactant intactId="EBI-15960777">
        <id>O00482-1</id>
    </interactant>
    <interactant intactId="EBI-81236">
        <id>Q15596</id>
        <label>NCOA2</label>
    </interactant>
    <organismsDiffer>false</organismsDiffer>
    <experiments>2</experiments>
</comment>
<comment type="interaction">
    <interactant intactId="EBI-15960777">
        <id>O00482-1</id>
    </interactant>
    <interactant intactId="EBI-3910729">
        <id>Q15466</id>
        <label>NR0B2</label>
    </interactant>
    <organismsDiffer>false</organismsDiffer>
    <experiments>2</experiments>
</comment>
<comment type="interaction">
    <interactant intactId="EBI-9257474">
        <id>O00482-2</id>
    </interactant>
    <interactant intactId="EBI-8469755">
        <id>Q6P1K8</id>
        <label>GTF2H2C_2</label>
    </interactant>
    <organismsDiffer>false</organismsDiffer>
    <experiments>3</experiments>
</comment>
<comment type="interaction">
    <interactant intactId="EBI-9257474">
        <id>O00482-2</id>
    </interactant>
    <interactant intactId="EBI-3912635">
        <id>Q92786</id>
        <label>PROX1</label>
    </interactant>
    <organismsDiffer>false</organismsDiffer>
    <experiments>9</experiments>
</comment>
<comment type="subcellular location">
    <subcellularLocation>
        <location evidence="22">Nucleus</location>
    </subcellularLocation>
    <subcellularLocation>
        <location evidence="8 10">Chromosome</location>
    </subcellularLocation>
</comment>
<comment type="alternative products">
    <event type="alternative splicing"/>
    <isoform>
        <id>O00482-1</id>
        <name>2</name>
        <name>B1F2</name>
        <sequence type="displayed"/>
    </isoform>
    <isoform>
        <id>O00482-2</id>
        <name>1</name>
        <sequence type="described" ref="VSP_003716"/>
    </isoform>
    <isoform>
        <id>O00482-3</id>
        <name>3</name>
        <sequence type="described" ref="VSP_003717"/>
    </isoform>
    <isoform>
        <id>O00482-4</id>
        <name>4</name>
        <sequence type="described" ref="VSP_054548"/>
    </isoform>
</comment>
<comment type="tissue specificity">
    <text evidence="5 29">Abundantly expressed in pancreas, less in liver, very low levels in heart and lung. Expressed in the Hep-G2 cell line (PubMed:9786908). Isoform 1 and isoform 2 seem to be present in fetal and adult liver and Hep-G2 cells (PubMed:10359768).</text>
</comment>
<comment type="domain">
    <text evidence="28">The C-terminal extension (CTE) loop competes with a DNA minor groove anchor of the nucleosome and releases entry-exit site DNA, thereby promoting opening of closed chromatin.</text>
</comment>
<comment type="PTM">
    <text evidence="12">Sumoylated by SUMO1 at Lys-270 during the hepatic acute phase response, leading to promote interaction with GPS2 and prevent N-Cor corepressor complex dissociation.</text>
</comment>
<comment type="similarity">
    <text evidence="37">Belongs to the nuclear hormone receptor family. NR5 subfamily.</text>
</comment>
<name>NR5A2_HUMAN</name>
<organism>
    <name type="scientific">Homo sapiens</name>
    <name type="common">Human</name>
    <dbReference type="NCBI Taxonomy" id="9606"/>
    <lineage>
        <taxon>Eukaryota</taxon>
        <taxon>Metazoa</taxon>
        <taxon>Chordata</taxon>
        <taxon>Craniata</taxon>
        <taxon>Vertebrata</taxon>
        <taxon>Euteleostomi</taxon>
        <taxon>Mammalia</taxon>
        <taxon>Eutheria</taxon>
        <taxon>Euarchontoglires</taxon>
        <taxon>Primates</taxon>
        <taxon>Haplorrhini</taxon>
        <taxon>Catarrhini</taxon>
        <taxon>Hominidae</taxon>
        <taxon>Homo</taxon>
    </lineage>
</organism>
<keyword id="KW-0002">3D-structure</keyword>
<keyword id="KW-0010">Activator</keyword>
<keyword id="KW-0025">Alternative splicing</keyword>
<keyword id="KW-0158">Chromosome</keyword>
<keyword id="KW-0217">Developmental protein</keyword>
<keyword id="KW-0238">DNA-binding</keyword>
<keyword id="KW-1017">Isopeptide bond</keyword>
<keyword id="KW-0446">Lipid-binding</keyword>
<keyword id="KW-0479">Metal-binding</keyword>
<keyword id="KW-0539">Nucleus</keyword>
<keyword id="KW-1267">Proteomics identification</keyword>
<keyword id="KW-0675">Receptor</keyword>
<keyword id="KW-1185">Reference proteome</keyword>
<keyword id="KW-0804">Transcription</keyword>
<keyword id="KW-0805">Transcription regulation</keyword>
<keyword id="KW-0832">Ubl conjugation</keyword>
<keyword id="KW-0862">Zinc</keyword>
<keyword id="KW-0863">Zinc-finger</keyword>
<evidence type="ECO:0000250" key="1">
    <source>
        <dbReference type="UniProtKB" id="P45448"/>
    </source>
</evidence>
<evidence type="ECO:0000255" key="2">
    <source>
        <dbReference type="PROSITE-ProRule" id="PRU00407"/>
    </source>
</evidence>
<evidence type="ECO:0000255" key="3">
    <source>
        <dbReference type="PROSITE-ProRule" id="PRU01189"/>
    </source>
</evidence>
<evidence type="ECO:0000256" key="4">
    <source>
        <dbReference type="SAM" id="MobiDB-lite"/>
    </source>
</evidence>
<evidence type="ECO:0000269" key="5">
    <source>
    </source>
</evidence>
<evidence type="ECO:0000269" key="6">
    <source>
    </source>
</evidence>
<evidence type="ECO:0000269" key="7">
    <source>
    </source>
</evidence>
<evidence type="ECO:0000269" key="8">
    <source>
    </source>
</evidence>
<evidence type="ECO:0000269" key="9">
    <source>
    </source>
</evidence>
<evidence type="ECO:0000269" key="10">
    <source>
    </source>
</evidence>
<evidence type="ECO:0000269" key="11">
    <source>
    </source>
</evidence>
<evidence type="ECO:0000269" key="12">
    <source>
    </source>
</evidence>
<evidence type="ECO:0000269" key="13">
    <source>
    </source>
</evidence>
<evidence type="ECO:0000269" key="14">
    <source>
    </source>
</evidence>
<evidence type="ECO:0000269" key="15">
    <source>
    </source>
</evidence>
<evidence type="ECO:0000269" key="16">
    <source>
    </source>
</evidence>
<evidence type="ECO:0000269" key="17">
    <source>
    </source>
</evidence>
<evidence type="ECO:0000269" key="18">
    <source>
    </source>
</evidence>
<evidence type="ECO:0000269" key="19">
    <source>
    </source>
</evidence>
<evidence type="ECO:0000269" key="20">
    <source>
    </source>
</evidence>
<evidence type="ECO:0000269" key="21">
    <source>
    </source>
</evidence>
<evidence type="ECO:0000269" key="22">
    <source>
    </source>
</evidence>
<evidence type="ECO:0000269" key="23">
    <source>
    </source>
</evidence>
<evidence type="ECO:0000269" key="24">
    <source>
    </source>
</evidence>
<evidence type="ECO:0000269" key="25">
    <source>
    </source>
</evidence>
<evidence type="ECO:0000269" key="26">
    <source>
    </source>
</evidence>
<evidence type="ECO:0000269" key="27">
    <source>
    </source>
</evidence>
<evidence type="ECO:0000269" key="28">
    <source>
    </source>
</evidence>
<evidence type="ECO:0000269" key="29">
    <source>
    </source>
</evidence>
<evidence type="ECO:0000303" key="30">
    <source>
    </source>
</evidence>
<evidence type="ECO:0000303" key="31">
    <source>
    </source>
</evidence>
<evidence type="ECO:0000303" key="32">
    <source>
    </source>
</evidence>
<evidence type="ECO:0000303" key="33">
    <source>
    </source>
</evidence>
<evidence type="ECO:0000303" key="34">
    <source>
    </source>
</evidence>
<evidence type="ECO:0000303" key="35">
    <source>
    </source>
</evidence>
<evidence type="ECO:0000303" key="36">
    <source>
    </source>
</evidence>
<evidence type="ECO:0000305" key="37"/>
<evidence type="ECO:0000312" key="38">
    <source>
        <dbReference type="HGNC" id="HGNC:7984"/>
    </source>
</evidence>
<evidence type="ECO:0007744" key="39">
    <source>
        <dbReference type="PDB" id="1YOK"/>
    </source>
</evidence>
<evidence type="ECO:0007744" key="40">
    <source>
        <dbReference type="PDB" id="1YUC"/>
    </source>
</evidence>
<evidence type="ECO:0007744" key="41">
    <source>
        <dbReference type="PDB" id="1ZDU"/>
    </source>
</evidence>
<evidence type="ECO:0007744" key="42">
    <source>
        <dbReference type="PDB" id="2A66"/>
    </source>
</evidence>
<evidence type="ECO:0007744" key="43">
    <source>
        <dbReference type="PDB" id="3TX7"/>
    </source>
</evidence>
<evidence type="ECO:0007744" key="44">
    <source>
        <dbReference type="PDB" id="4DOR"/>
    </source>
</evidence>
<evidence type="ECO:0007744" key="45">
    <source>
        <dbReference type="PDB" id="4DOS"/>
    </source>
</evidence>
<evidence type="ECO:0007744" key="46">
    <source>
        <dbReference type="PDB" id="4IS8"/>
    </source>
</evidence>
<evidence type="ECO:0007744" key="47">
    <source>
        <dbReference type="PDB" id="4PLD"/>
    </source>
</evidence>
<evidence type="ECO:0007744" key="48">
    <source>
        <dbReference type="PDB" id="4PLE"/>
    </source>
</evidence>
<evidence type="ECO:0007744" key="49">
    <source>
        <dbReference type="PDB" id="4RWV"/>
    </source>
</evidence>
<evidence type="ECO:0007744" key="50">
    <source>
        <dbReference type="PDB" id="5L0M"/>
    </source>
</evidence>
<evidence type="ECO:0007744" key="51">
    <source>
        <dbReference type="PDB" id="5L11"/>
    </source>
</evidence>
<evidence type="ECO:0007744" key="52">
    <source>
        <dbReference type="PDB" id="5SYZ"/>
    </source>
</evidence>
<evidence type="ECO:0007744" key="53">
    <source>
        <dbReference type="PDB" id="5UNJ"/>
    </source>
</evidence>
<evidence type="ECO:0007744" key="54">
    <source>
        <dbReference type="PDB" id="6OQX"/>
    </source>
</evidence>
<evidence type="ECO:0007744" key="55">
    <source>
        <dbReference type="PDB" id="6OQY"/>
    </source>
</evidence>
<evidence type="ECO:0007744" key="56">
    <source>
        <dbReference type="PDB" id="6OR1"/>
    </source>
</evidence>
<evidence type="ECO:0007744" key="57">
    <source>
        <dbReference type="PDB" id="6VC2"/>
    </source>
</evidence>
<evidence type="ECO:0007744" key="58">
    <source>
        <dbReference type="PDB" id="6VIF"/>
    </source>
</evidence>
<evidence type="ECO:0007744" key="59">
    <source>
        <dbReference type="PDB" id="7TT8"/>
    </source>
</evidence>
<evidence type="ECO:0007744" key="60">
    <source>
        <dbReference type="PDB" id="8PKI"/>
    </source>
</evidence>
<evidence type="ECO:0007829" key="61">
    <source>
        <dbReference type="PDB" id="4PLD"/>
    </source>
</evidence>
<evidence type="ECO:0007829" key="62">
    <source>
        <dbReference type="PDB" id="5L0M"/>
    </source>
</evidence>
<evidence type="ECO:0007829" key="63">
    <source>
        <dbReference type="PDB" id="6OQX"/>
    </source>
</evidence>
<evidence type="ECO:0007829" key="64">
    <source>
        <dbReference type="PDB" id="6VC2"/>
    </source>
</evidence>
<evidence type="ECO:0007829" key="65">
    <source>
        <dbReference type="PDB" id="7JYD"/>
    </source>
</evidence>
<reference key="1">
    <citation type="journal article" date="1998" name="J. Biol. Chem.">
        <title>Cloning and characterization of a novel human hepatocyte transcription factor, hB1F, which binds and activates enhancer II of hepatitis B virus.</title>
        <authorList>
            <person name="Li M."/>
            <person name="Xie Y.-H."/>
            <person name="Kong Y.-Y."/>
            <person name="Wu X."/>
            <person name="Zhu L."/>
            <person name="Wang Y."/>
        </authorList>
    </citation>
    <scope>NUCLEOTIDE SEQUENCE [MRNA] (ISOFORM 1)</scope>
    <scope>ALTERNATIVE SPLICING</scope>
    <scope>FUNCTION</scope>
    <scope>TISSUE SPECIFICITY</scope>
    <scope>FUNCTION (MICROBIAL INFECTION)</scope>
    <source>
        <tissue>Liver</tissue>
    </source>
</reference>
<reference key="2">
    <citation type="submission" date="1999-01" db="EMBL/GenBank/DDBJ databases">
        <authorList>
            <person name="Li M."/>
            <person name="Xie Y.-H."/>
            <person name="Wang Y."/>
        </authorList>
    </citation>
    <scope>NUCLEOTIDE SEQUENCE [MRNA] (ISOFORM 2)</scope>
    <source>
        <tissue>Hepatoma</tissue>
    </source>
</reference>
<reference key="3">
    <citation type="journal article" date="1999" name="Proc. Natl. Acad. Sci. U.S.A.">
        <title>CPF: an orphan nuclear receptor that regulates liver-specific expression of the human cholesterol 7alpha-hydroxylase gene.</title>
        <authorList>
            <person name="Nitta M."/>
            <person name="Ku S."/>
            <person name="Brown C."/>
            <person name="Okamoto A.Y."/>
            <person name="Shan B."/>
        </authorList>
    </citation>
    <scope>NUCLEOTIDE SEQUENCE [MRNA] (ISOFORMS 1; 2 AND 3)</scope>
    <scope>FUNCTION</scope>
    <scope>TISSUE SPECIFICITY</scope>
    <source>
        <tissue>Liver</tissue>
    </source>
</reference>
<reference key="4">
    <citation type="journal article" date="2001" name="Gene">
        <title>Characterization of the genomic structure and tissue-specific promoter of the human nuclear receptor NR5A2 (hB1F) gene.</title>
        <authorList>
            <person name="Zhang C.K."/>
            <person name="Lin W."/>
            <person name="Cai Y.N."/>
            <person name="Xu P.L."/>
            <person name="Dong H."/>
            <person name="Li M."/>
            <person name="Kong Y.Y."/>
            <person name="Fu G."/>
            <person name="Xie Y.H."/>
            <person name="Huang G.M."/>
            <person name="Wang Y."/>
        </authorList>
    </citation>
    <scope>NUCLEOTIDE SEQUENCE [GENOMIC DNA]</scope>
    <scope>ALTERNATIVE SPLICING</scope>
</reference>
<reference key="5">
    <citation type="journal article" date="2004" name="Nat. Genet.">
        <title>Complete sequencing and characterization of 21,243 full-length human cDNAs.</title>
        <authorList>
            <person name="Ota T."/>
            <person name="Suzuki Y."/>
            <person name="Nishikawa T."/>
            <person name="Otsuki T."/>
            <person name="Sugiyama T."/>
            <person name="Irie R."/>
            <person name="Wakamatsu A."/>
            <person name="Hayashi K."/>
            <person name="Sato H."/>
            <person name="Nagai K."/>
            <person name="Kimura K."/>
            <person name="Makita H."/>
            <person name="Sekine M."/>
            <person name="Obayashi M."/>
            <person name="Nishi T."/>
            <person name="Shibahara T."/>
            <person name="Tanaka T."/>
            <person name="Ishii S."/>
            <person name="Yamamoto J."/>
            <person name="Saito K."/>
            <person name="Kawai Y."/>
            <person name="Isono Y."/>
            <person name="Nakamura Y."/>
            <person name="Nagahari K."/>
            <person name="Murakami K."/>
            <person name="Yasuda T."/>
            <person name="Iwayanagi T."/>
            <person name="Wagatsuma M."/>
            <person name="Shiratori A."/>
            <person name="Sudo H."/>
            <person name="Hosoiri T."/>
            <person name="Kaku Y."/>
            <person name="Kodaira H."/>
            <person name="Kondo H."/>
            <person name="Sugawara M."/>
            <person name="Takahashi M."/>
            <person name="Kanda K."/>
            <person name="Yokoi T."/>
            <person name="Furuya T."/>
            <person name="Kikkawa E."/>
            <person name="Omura Y."/>
            <person name="Abe K."/>
            <person name="Kamihara K."/>
            <person name="Katsuta N."/>
            <person name="Sato K."/>
            <person name="Tanikawa M."/>
            <person name="Yamazaki M."/>
            <person name="Ninomiya K."/>
            <person name="Ishibashi T."/>
            <person name="Yamashita H."/>
            <person name="Murakawa K."/>
            <person name="Fujimori K."/>
            <person name="Tanai H."/>
            <person name="Kimata M."/>
            <person name="Watanabe M."/>
            <person name="Hiraoka S."/>
            <person name="Chiba Y."/>
            <person name="Ishida S."/>
            <person name="Ono Y."/>
            <person name="Takiguchi S."/>
            <person name="Watanabe S."/>
            <person name="Yosida M."/>
            <person name="Hotuta T."/>
            <person name="Kusano J."/>
            <person name="Kanehori K."/>
            <person name="Takahashi-Fujii A."/>
            <person name="Hara H."/>
            <person name="Tanase T.-O."/>
            <person name="Nomura Y."/>
            <person name="Togiya S."/>
            <person name="Komai F."/>
            <person name="Hara R."/>
            <person name="Takeuchi K."/>
            <person name="Arita M."/>
            <person name="Imose N."/>
            <person name="Musashino K."/>
            <person name="Yuuki H."/>
            <person name="Oshima A."/>
            <person name="Sasaki N."/>
            <person name="Aotsuka S."/>
            <person name="Yoshikawa Y."/>
            <person name="Matsunawa H."/>
            <person name="Ichihara T."/>
            <person name="Shiohata N."/>
            <person name="Sano S."/>
            <person name="Moriya S."/>
            <person name="Momiyama H."/>
            <person name="Satoh N."/>
            <person name="Takami S."/>
            <person name="Terashima Y."/>
            <person name="Suzuki O."/>
            <person name="Nakagawa S."/>
            <person name="Senoh A."/>
            <person name="Mizoguchi H."/>
            <person name="Goto Y."/>
            <person name="Shimizu F."/>
            <person name="Wakebe H."/>
            <person name="Hishigaki H."/>
            <person name="Watanabe T."/>
            <person name="Sugiyama A."/>
            <person name="Takemoto M."/>
            <person name="Kawakami B."/>
            <person name="Yamazaki M."/>
            <person name="Watanabe K."/>
            <person name="Kumagai A."/>
            <person name="Itakura S."/>
            <person name="Fukuzumi Y."/>
            <person name="Fujimori Y."/>
            <person name="Komiyama M."/>
            <person name="Tashiro H."/>
            <person name="Tanigami A."/>
            <person name="Fujiwara T."/>
            <person name="Ono T."/>
            <person name="Yamada K."/>
            <person name="Fujii Y."/>
            <person name="Ozaki K."/>
            <person name="Hirao M."/>
            <person name="Ohmori Y."/>
            <person name="Kawabata A."/>
            <person name="Hikiji T."/>
            <person name="Kobatake N."/>
            <person name="Inagaki H."/>
            <person name="Ikema Y."/>
            <person name="Okamoto S."/>
            <person name="Okitani R."/>
            <person name="Kawakami T."/>
            <person name="Noguchi S."/>
            <person name="Itoh T."/>
            <person name="Shigeta K."/>
            <person name="Senba T."/>
            <person name="Matsumura K."/>
            <person name="Nakajima Y."/>
            <person name="Mizuno T."/>
            <person name="Morinaga M."/>
            <person name="Sasaki M."/>
            <person name="Togashi T."/>
            <person name="Oyama M."/>
            <person name="Hata H."/>
            <person name="Watanabe M."/>
            <person name="Komatsu T."/>
            <person name="Mizushima-Sugano J."/>
            <person name="Satoh T."/>
            <person name="Shirai Y."/>
            <person name="Takahashi Y."/>
            <person name="Nakagawa K."/>
            <person name="Okumura K."/>
            <person name="Nagase T."/>
            <person name="Nomura N."/>
            <person name="Kikuchi H."/>
            <person name="Masuho Y."/>
            <person name="Yamashita R."/>
            <person name="Nakai K."/>
            <person name="Yada T."/>
            <person name="Nakamura Y."/>
            <person name="Ohara O."/>
            <person name="Isogai T."/>
            <person name="Sugano S."/>
        </authorList>
    </citation>
    <scope>NUCLEOTIDE SEQUENCE [LARGE SCALE MRNA] (ISOFORM 4)</scope>
    <source>
        <tissue>Trachea</tissue>
    </source>
</reference>
<reference key="6">
    <citation type="journal article" date="2006" name="Nature">
        <title>The DNA sequence and biological annotation of human chromosome 1.</title>
        <authorList>
            <person name="Gregory S.G."/>
            <person name="Barlow K.F."/>
            <person name="McLay K.E."/>
            <person name="Kaul R."/>
            <person name="Swarbreck D."/>
            <person name="Dunham A."/>
            <person name="Scott C.E."/>
            <person name="Howe K.L."/>
            <person name="Woodfine K."/>
            <person name="Spencer C.C.A."/>
            <person name="Jones M.C."/>
            <person name="Gillson C."/>
            <person name="Searle S."/>
            <person name="Zhou Y."/>
            <person name="Kokocinski F."/>
            <person name="McDonald L."/>
            <person name="Evans R."/>
            <person name="Phillips K."/>
            <person name="Atkinson A."/>
            <person name="Cooper R."/>
            <person name="Jones C."/>
            <person name="Hall R.E."/>
            <person name="Andrews T.D."/>
            <person name="Lloyd C."/>
            <person name="Ainscough R."/>
            <person name="Almeida J.P."/>
            <person name="Ambrose K.D."/>
            <person name="Anderson F."/>
            <person name="Andrew R.W."/>
            <person name="Ashwell R.I.S."/>
            <person name="Aubin K."/>
            <person name="Babbage A.K."/>
            <person name="Bagguley C.L."/>
            <person name="Bailey J."/>
            <person name="Beasley H."/>
            <person name="Bethel G."/>
            <person name="Bird C.P."/>
            <person name="Bray-Allen S."/>
            <person name="Brown J.Y."/>
            <person name="Brown A.J."/>
            <person name="Buckley D."/>
            <person name="Burton J."/>
            <person name="Bye J."/>
            <person name="Carder C."/>
            <person name="Chapman J.C."/>
            <person name="Clark S.Y."/>
            <person name="Clarke G."/>
            <person name="Clee C."/>
            <person name="Cobley V."/>
            <person name="Collier R.E."/>
            <person name="Corby N."/>
            <person name="Coville G.J."/>
            <person name="Davies J."/>
            <person name="Deadman R."/>
            <person name="Dunn M."/>
            <person name="Earthrowl M."/>
            <person name="Ellington A.G."/>
            <person name="Errington H."/>
            <person name="Frankish A."/>
            <person name="Frankland J."/>
            <person name="French L."/>
            <person name="Garner P."/>
            <person name="Garnett J."/>
            <person name="Gay L."/>
            <person name="Ghori M.R.J."/>
            <person name="Gibson R."/>
            <person name="Gilby L.M."/>
            <person name="Gillett W."/>
            <person name="Glithero R.J."/>
            <person name="Grafham D.V."/>
            <person name="Griffiths C."/>
            <person name="Griffiths-Jones S."/>
            <person name="Grocock R."/>
            <person name="Hammond S."/>
            <person name="Harrison E.S.I."/>
            <person name="Hart E."/>
            <person name="Haugen E."/>
            <person name="Heath P.D."/>
            <person name="Holmes S."/>
            <person name="Holt K."/>
            <person name="Howden P.J."/>
            <person name="Hunt A.R."/>
            <person name="Hunt S.E."/>
            <person name="Hunter G."/>
            <person name="Isherwood J."/>
            <person name="James R."/>
            <person name="Johnson C."/>
            <person name="Johnson D."/>
            <person name="Joy A."/>
            <person name="Kay M."/>
            <person name="Kershaw J.K."/>
            <person name="Kibukawa M."/>
            <person name="Kimberley A.M."/>
            <person name="King A."/>
            <person name="Knights A.J."/>
            <person name="Lad H."/>
            <person name="Laird G."/>
            <person name="Lawlor S."/>
            <person name="Leongamornlert D.A."/>
            <person name="Lloyd D.M."/>
            <person name="Loveland J."/>
            <person name="Lovell J."/>
            <person name="Lush M.J."/>
            <person name="Lyne R."/>
            <person name="Martin S."/>
            <person name="Mashreghi-Mohammadi M."/>
            <person name="Matthews L."/>
            <person name="Matthews N.S.W."/>
            <person name="McLaren S."/>
            <person name="Milne S."/>
            <person name="Mistry S."/>
            <person name="Moore M.J.F."/>
            <person name="Nickerson T."/>
            <person name="O'Dell C.N."/>
            <person name="Oliver K."/>
            <person name="Palmeiri A."/>
            <person name="Palmer S.A."/>
            <person name="Parker A."/>
            <person name="Patel D."/>
            <person name="Pearce A.V."/>
            <person name="Peck A.I."/>
            <person name="Pelan S."/>
            <person name="Phelps K."/>
            <person name="Phillimore B.J."/>
            <person name="Plumb R."/>
            <person name="Rajan J."/>
            <person name="Raymond C."/>
            <person name="Rouse G."/>
            <person name="Saenphimmachak C."/>
            <person name="Sehra H.K."/>
            <person name="Sheridan E."/>
            <person name="Shownkeen R."/>
            <person name="Sims S."/>
            <person name="Skuce C.D."/>
            <person name="Smith M."/>
            <person name="Steward C."/>
            <person name="Subramanian S."/>
            <person name="Sycamore N."/>
            <person name="Tracey A."/>
            <person name="Tromans A."/>
            <person name="Van Helmond Z."/>
            <person name="Wall M."/>
            <person name="Wallis J.M."/>
            <person name="White S."/>
            <person name="Whitehead S.L."/>
            <person name="Wilkinson J.E."/>
            <person name="Willey D.L."/>
            <person name="Williams H."/>
            <person name="Wilming L."/>
            <person name="Wray P.W."/>
            <person name="Wu Z."/>
            <person name="Coulson A."/>
            <person name="Vaudin M."/>
            <person name="Sulston J.E."/>
            <person name="Durbin R.M."/>
            <person name="Hubbard T."/>
            <person name="Wooster R."/>
            <person name="Dunham I."/>
            <person name="Carter N.P."/>
            <person name="McVean G."/>
            <person name="Ross M.T."/>
            <person name="Harrow J."/>
            <person name="Olson M.V."/>
            <person name="Beck S."/>
            <person name="Rogers J."/>
            <person name="Bentley D.R."/>
        </authorList>
    </citation>
    <scope>NUCLEOTIDE SEQUENCE [LARGE SCALE GENOMIC DNA]</scope>
</reference>
<reference key="7">
    <citation type="submission" date="2005-07" db="EMBL/GenBank/DDBJ databases">
        <authorList>
            <person name="Mural R.J."/>
            <person name="Istrail S."/>
            <person name="Sutton G.G."/>
            <person name="Florea L."/>
            <person name="Halpern A.L."/>
            <person name="Mobarry C.M."/>
            <person name="Lippert R."/>
            <person name="Walenz B."/>
            <person name="Shatkay H."/>
            <person name="Dew I."/>
            <person name="Miller J.R."/>
            <person name="Flanigan M.J."/>
            <person name="Edwards N.J."/>
            <person name="Bolanos R."/>
            <person name="Fasulo D."/>
            <person name="Halldorsson B.V."/>
            <person name="Hannenhalli S."/>
            <person name="Turner R."/>
            <person name="Yooseph S."/>
            <person name="Lu F."/>
            <person name="Nusskern D.R."/>
            <person name="Shue B.C."/>
            <person name="Zheng X.H."/>
            <person name="Zhong F."/>
            <person name="Delcher A.L."/>
            <person name="Huson D.H."/>
            <person name="Kravitz S.A."/>
            <person name="Mouchard L."/>
            <person name="Reinert K."/>
            <person name="Remington K.A."/>
            <person name="Clark A.G."/>
            <person name="Waterman M.S."/>
            <person name="Eichler E.E."/>
            <person name="Adams M.D."/>
            <person name="Hunkapiller M.W."/>
            <person name="Myers E.W."/>
            <person name="Venter J.C."/>
        </authorList>
    </citation>
    <scope>NUCLEOTIDE SEQUENCE [LARGE SCALE GENOMIC DNA]</scope>
</reference>
<reference key="8">
    <citation type="journal article" date="2004" name="Genome Res.">
        <title>The status, quality, and expansion of the NIH full-length cDNA project: the Mammalian Gene Collection (MGC).</title>
        <authorList>
            <consortium name="The MGC Project Team"/>
        </authorList>
    </citation>
    <scope>NUCLEOTIDE SEQUENCE [LARGE SCALE MRNA] (ISOFORM 1)</scope>
</reference>
<reference key="9">
    <citation type="journal article" date="1998" name="Cytogenet. Cell Genet.">
        <title>Assignment of the fetoprotein transcription factor gene (FTF) to human chromosome band 1q32.11 by in situ hybridization.</title>
        <authorList>
            <person name="Galarneau L."/>
            <person name="Drouin R."/>
            <person name="Belanger L."/>
        </authorList>
    </citation>
    <scope>NUCLEOTIDE SEQUENCE [MRNA] OF 41-541</scope>
</reference>
<reference key="10">
    <citation type="journal article" date="2003" name="Cell Res.">
        <title>LRH-1/hB1F and HNF1 synergistically up-regulate hepatitis B virus gene transcription and DNA replication.</title>
        <authorList>
            <person name="Cai Y.N."/>
            <person name="Zhou Q."/>
            <person name="Kong Y.Y."/>
            <person name="Li M."/>
            <person name="Viollet B."/>
            <person name="Xie Y.H."/>
            <person name="Wang Y."/>
        </authorList>
    </citation>
    <scope>FUNCTION (MICROBIAL INFECTION)</scope>
    <scope>INTERACTION WITH HNF1A</scope>
</reference>
<reference key="11">
    <citation type="journal article" date="2008" name="Biochemistry">
        <title>Molecular dynamics simulations of human LRH-1: the impact of ligand binding in a constitutively active nuclear receptor.</title>
        <authorList>
            <person name="Burendahl S."/>
            <person name="Treuter E."/>
            <person name="Nilsson L."/>
        </authorList>
    </citation>
    <scope>FUNCTION</scope>
</reference>
<reference key="12">
    <citation type="journal article" date="2010" name="Genes Dev.">
        <title>GPS2-dependent corepressor/SUMO pathways govern anti-inflammatory actions of LRH-1 and LXRbeta in the hepatic acute phase response.</title>
        <authorList>
            <person name="Venteclef N."/>
            <person name="Jakobsson T."/>
            <person name="Ehrlund A."/>
            <person name="Damdimopoulos A."/>
            <person name="Mikkonen L."/>
            <person name="Ellis E."/>
            <person name="Nilsson L.M."/>
            <person name="Parini P."/>
            <person name="Jaenne O.A."/>
            <person name="Gustafsson J.A."/>
            <person name="Steffensen K.R."/>
            <person name="Treuter E."/>
        </authorList>
    </citation>
    <scope>FUNCTION</scope>
    <scope>INTERACTION WITH GPS2</scope>
    <scope>SUMOYLATION AT LYS-270</scope>
    <scope>MUTAGENESIS OF LYS-270</scope>
</reference>
<reference key="13">
    <citation type="journal article" date="2011" name="Nature">
        <title>A nuclear-receptor-dependent phosphatidylcholine pathway with antidiabetic effects.</title>
        <authorList>
            <person name="Lee J.M."/>
            <person name="Lee Y.K."/>
            <person name="Mamrosh J.L."/>
            <person name="Busby S.A."/>
            <person name="Griffin P.R."/>
            <person name="Pathak M.C."/>
            <person name="Ortlund E.A."/>
            <person name="Moore D.D."/>
        </authorList>
    </citation>
    <scope>FUNCTION</scope>
</reference>
<reference key="14">
    <citation type="journal article" date="2017" name="J. Genet. Genomics">
        <title>LRH-1 senses signaling from phosphatidylcholine to regulate the expansion growth of digestive organs via synergy with Wnt/beta-catenin signaling in zebrafish.</title>
        <authorList>
            <person name="Zhai G."/>
            <person name="Song J."/>
            <person name="Shu T."/>
            <person name="Yan J."/>
            <person name="Jin X."/>
            <person name="He J."/>
            <person name="Yin Z."/>
        </authorList>
    </citation>
    <scope>SUBCELLULAR LOCATION</scope>
</reference>
<reference key="15">
    <citation type="journal article" date="2020" name="Structure">
        <title>Integrated structural modeling of full-length LRH-1 reveals inter-domain interactions contribute to receptor structure and function.</title>
        <authorList>
            <person name="Seacrist C.D."/>
            <person name="Kuenze G."/>
            <person name="Hoffmann R.M."/>
            <person name="Moeller B.E."/>
            <person name="Burke J.E."/>
            <person name="Meiler J."/>
            <person name="Blind R.D."/>
        </authorList>
    </citation>
    <scope>FUNCTION</scope>
    <scope>INTERACTION WITH PPARGC1A AND NR0B1</scope>
    <scope>MUTAGENESIS OF SER-148; ARG-174; 179-LYS--LYS-183; ASP-314 AND ALA-324</scope>
</reference>
<reference evidence="39" key="16">
    <citation type="journal article" date="2005" name="Cell">
        <title>Structural analyses reveal phosphatidyl inositols as ligands for the NR5 orphan receptors SF-1 and LRH-1.</title>
        <authorList>
            <person name="Krylova I.N."/>
            <person name="Sablin E.P."/>
            <person name="Moore J."/>
            <person name="Xu R.X."/>
            <person name="Waitt G.M."/>
            <person name="MacKay J.A."/>
            <person name="Juzumiene D."/>
            <person name="Bynum J.M."/>
            <person name="Madauss K."/>
            <person name="Montana V."/>
            <person name="Lebedeva L."/>
            <person name="Suzawa M."/>
            <person name="Williams J.D."/>
            <person name="Williams S.P."/>
            <person name="Guy R.K."/>
            <person name="Thornton J.W."/>
            <person name="Fletterick R.J."/>
            <person name="Willson T.M."/>
            <person name="Ingraham H.A."/>
        </authorList>
    </citation>
    <scope>X-RAY CRYSTALLOGRAPHY (2.5 ANGSTROMS) OF 300-541 IN COMPLEX WITH NCOA2 AND PHOSPHOLIPIDS</scope>
    <scope>FUNCTION</scope>
</reference>
<reference evidence="42" key="17">
    <citation type="journal article" date="2005" name="J. Mol. Biol.">
        <title>Crystal structure of the human LRH-1 DBD-DNA complex reveals Ftz-F1 domain positioning is required for receptor activity.</title>
        <authorList>
            <person name="Solomon I.H."/>
            <person name="Hager J.M."/>
            <person name="Safi R."/>
            <person name="McDonnell D.P."/>
            <person name="Redinbo M.R."/>
            <person name="Ortlund E.A."/>
        </authorList>
    </citation>
    <scope>X-RAY CRYSTALLOGRAPHY (2.2 ANGSTROMS) OF 79-187 IN COMPLEX WITH ZINC AND DNA</scope>
    <scope>SUBCELLULAR LOCATION</scope>
    <scope>MUTAGENESIS OF TYR-96; PHE-168; 169-GLY-PRO-170 AND TYR-172</scope>
    <scope>FUNCTION</scope>
</reference>
<reference evidence="40" key="18">
    <citation type="journal article" date="2005" name="Nat. Struct. Mol. Biol.">
        <title>Modulation of human nuclear receptor LRH-1 activity by phospholipids and SHP.</title>
        <authorList>
            <person name="Ortlund E.A."/>
            <person name="Lee Y."/>
            <person name="Solomon I.H."/>
            <person name="Hager J.M."/>
            <person name="Safi R."/>
            <person name="Choi Y."/>
            <person name="Guan Z."/>
            <person name="Tripathy A."/>
            <person name="Raetz C.R.H."/>
            <person name="McDonnell D.P."/>
            <person name="Moore D.D."/>
            <person name="Redinbo M.R."/>
        </authorList>
    </citation>
    <scope>X-RAY CRYSTALLOGRAPHY (1.9 ANGSTROMS) OF 290-541 IN COMPLEX WITH NR0B2 AND PHOSPHOLIPID</scope>
    <scope>SUBCELLULAR LOCATION</scope>
    <scope>MUTAGENESIS OF PHE-342 AND ILE-416</scope>
    <scope>FUNCTION</scope>
</reference>
<reference evidence="41" key="19">
    <citation type="journal article" date="2005" name="Proc. Natl. Acad. Sci. U.S.A.">
        <title>The crystal structures of human steroidogenic factor-1 and liver receptor homologue-1.</title>
        <authorList>
            <person name="Wang W."/>
            <person name="Zhang C."/>
            <person name="Marimuthu A."/>
            <person name="Krupka H.I."/>
            <person name="Tabrizizad M."/>
            <person name="Shelloe R."/>
            <person name="Mehra U."/>
            <person name="Eng K."/>
            <person name="Nguyen H."/>
            <person name="Settachatgul C."/>
            <person name="Powell B."/>
            <person name="Milburn M.V."/>
            <person name="West B.L."/>
        </authorList>
    </citation>
    <scope>X-RAY CRYSTALLOGRAPHY (2.5 ANGSTROMS) OF 297-541 IN COMPLEX WITH NCOA2 AND PHOSPHATIDYLGLYCEROL-PHOSPHOGLYCEROL</scope>
    <scope>FUNCTION</scope>
</reference>
<reference evidence="44 45" key="20">
    <citation type="journal article" date="2012" name="Nat. Struct. Mol. Biol.">
        <title>Antidiabetic phospholipid-nuclear receptor complex reveals the mechanism for phospholipid-driven gene regulation.</title>
        <authorList>
            <person name="Musille P.M."/>
            <person name="Pathak M."/>
            <person name="Lauer J.L."/>
            <person name="Hudson W.H."/>
            <person name="Griffin P.R."/>
            <person name="Ortlund E.A."/>
        </authorList>
    </citation>
    <scope>X-RAY CRYSTALLOGRAPHY (1.90 ANGSTROMS) OF 290-541 IN COMPLEX WITH DILAUROYLPHOSPHATIDYLCHOLINE; NCOA2 AND NR0B2</scope>
    <scope>FUNCTION</scope>
    <scope>INTERACTION WITH NCOA2 AND NR0B2</scope>
    <scope>MUTAGENESIS OF GLY-398 AND GLY-421</scope>
</reference>
<reference evidence="43" key="21">
    <citation type="journal article" date="2012" name="Proc. Natl. Acad. Sci. U.S.A.">
        <title>Structural basis of coactivation of liver receptor homolog-1 by beta-catenin.</title>
        <authorList>
            <person name="Yumoto F."/>
            <person name="Nguyen P."/>
            <person name="Sablin E.P."/>
            <person name="Baxter J.D."/>
            <person name="Webb P."/>
            <person name="Fletterick R.J."/>
        </authorList>
    </citation>
    <scope>X-RAY CRYSTALLOGRAPHY (2.76 ANGSTROMS) OF 191-541 IN COMPLEX WITH A PHOSPHOLIPID AGONIST AND CTNNB1</scope>
    <scope>INTERACTION WITH CTNNB1</scope>
</reference>
<reference evidence="46" key="22">
    <citation type="journal article" date="2013" name="J. Biol. Chem.">
        <title>Divergent sequence tunes ligand sensitivity in phospholipid-regulated hormone receptors.</title>
        <authorList>
            <person name="Musille P.M."/>
            <person name="Pathak M."/>
            <person name="Lauer J.L."/>
            <person name="Griffin P.R."/>
            <person name="Ortlund E.A."/>
        </authorList>
    </citation>
    <scope>X-RAY CRYSTALLOGRAPHY (2.78 ANGSTROMS) OF 300-538</scope>
    <scope>FUNCTION</scope>
</reference>
<reference evidence="49" key="23">
    <citation type="journal article" date="2015" name="J. Struct. Biol.">
        <title>Structure of liver receptor homolog-1 (NR5A2) with PIP3 hormone bound in the ligand binding pocket.</title>
        <authorList>
            <person name="Sablin E.P."/>
            <person name="Blind R.D."/>
            <person name="Uthayaruban R."/>
            <person name="Chiu H.J."/>
            <person name="Deacon A.M."/>
            <person name="Das D."/>
            <person name="Ingraham H.A."/>
            <person name="Fletterick R.J."/>
        </authorList>
    </citation>
    <scope>X-RAY CRYSTALLOGRAPHY (1.86 ANGSTROMS) OF 294-541 IN COMPLEX WITH PHOSPHATIDYLINOSITOL PIP3 AND NR0B1</scope>
    <scope>FUNCTION</scope>
</reference>
<reference evidence="47 48" key="24">
    <citation type="journal article" date="2016" name="J. Biol. Chem.">
        <title>Unexpected allosteric network contributes to LRH-1 co-regulator selectivity.</title>
        <authorList>
            <person name="Musille P.M."/>
            <person name="Kossmann B.R."/>
            <person name="Kohn J.A."/>
            <person name="Ivanov I."/>
            <person name="Ortlund E.A."/>
        </authorList>
    </citation>
    <scope>X-RAY CRYSTALLOGRAPHY (1.75 ANGSTROMS) OF 301-541 IN COMPLEX WITH DILAUROYLPHOSPHATIDYLCHOLINE AND NCOA2</scope>
    <scope>FUNCTION</scope>
    <scope>INTERACTION WITH NCOA2</scope>
</reference>
<reference evidence="51 52" key="25">
    <citation type="journal article" date="2016" name="J. Biol. Chem.">
        <title>Crystal structures of the nuclear receptor, liver receptor homolog 1, bound to synthetic agonists.</title>
        <authorList>
            <person name="Mays S.G."/>
            <person name="Okafor C.D."/>
            <person name="Whitby R.J."/>
            <person name="Goswami D."/>
            <person name="Stec J."/>
            <person name="Flynn A.R."/>
            <person name="Dugan M.C."/>
            <person name="Jui N.T."/>
            <person name="Griffin P.R."/>
            <person name="Ortlund E.A."/>
        </authorList>
    </citation>
    <scope>X-RAY CRYSTALLOGRAPHY (1.85 ANGSTROMS) OF 299-541 IN COMPLEX WITH NCOA2</scope>
    <scope>INTERACTION WITH NCOA2</scope>
    <scope>ACTIVITY REGULATION</scope>
    <scope>MUTAGENESIS OF THR-352 AND HIS-390</scope>
</reference>
<reference evidence="50" key="26">
    <citation type="journal article" date="2016" name="J. Mol. Biol.">
        <title>A Structural investigation into Oct4 regulation by orphan nuclear receptors, germ cell nuclear factor (GCNF), and liver receptor homolog-1 (LRH-1).</title>
        <authorList>
            <person name="Weikum E.R."/>
            <person name="Tuntland M.L."/>
            <person name="Murphy M.N."/>
            <person name="Ortlund E.A."/>
        </authorList>
    </citation>
    <scope>X-RAY CRYSTALLOGRAPHY (2.20 ANGSTROMS) OF 79-187 IN COMPLEX WITH ZINC</scope>
    <scope>FUNCTION</scope>
    <scope>MUTAGENESIS OF 160-ARG--ARG-162</scope>
</reference>
<reference evidence="53" key="27">
    <citation type="journal article" date="2017" name="Mol. Pharmacol.">
        <title>Structure and dynamics of the liver receptor homolog 1-PGC1alpha complex.</title>
        <authorList>
            <person name="Mays S.G."/>
            <person name="Okafor C.D."/>
            <person name="Tuntland M.L."/>
            <person name="Whitby R.J."/>
            <person name="Dharmarajan V."/>
            <person name="Stec J."/>
            <person name="Griffin P.R."/>
            <person name="Ortlund E.A."/>
        </authorList>
    </citation>
    <scope>X-RAY CRYSTALLOGRAPHY (1.96 ANGSTROMS) OF 299-541 IN COMPLEX WITH PPARGC1A</scope>
    <scope>INTERACTION WITH PPARGC1A</scope>
</reference>
<reference evidence="54 55 56" key="28">
    <citation type="journal article" date="2019" name="J. Med. Chem.">
        <title>Development of the first low nanomolar liver receptor homolog-1 agonist through structure-guided design.</title>
        <authorList>
            <person name="Mays S.G."/>
            <person name="Flynn A.R."/>
            <person name="Cornelison J.L."/>
            <person name="Okafor C.D."/>
            <person name="Wang H."/>
            <person name="Wang G."/>
            <person name="Huang X."/>
            <person name="Donaldson H.N."/>
            <person name="Millings E.J."/>
            <person name="Polavarapu R."/>
            <person name="Moore D.D."/>
            <person name="Calvert J.W."/>
            <person name="Jui N.T."/>
            <person name="Ortlund E.A."/>
        </authorList>
    </citation>
    <scope>X-RAY CRYSTALLOGRAPHY (2.00 ANGSTROMS) OF 299-541 IN COMPLEX WITH AGONIST AND NCOA2</scope>
    <scope>ACTIVITY REGULATION</scope>
    <scope>INTERACTION WITH NCOA2</scope>
</reference>
<reference evidence="57" key="29">
    <citation type="journal article" date="2020" name="Sci. Rep.">
        <title>Enantiomer-specific activities of an LRH-1 and SF-1 dual agonist.</title>
        <authorList>
            <person name="Mays S.G."/>
            <person name="Stec J."/>
            <person name="Liu X."/>
            <person name="D'Agostino E.H."/>
            <person name="Whitby R.J."/>
            <person name="Ortlund E.A."/>
        </authorList>
    </citation>
    <scope>X-RAY CRYSTALLOGRAPHY (1.70 ANGSTROMS) OF 299-541 IN COMPLEX WITH AGONIST AND NCOA2</scope>
    <scope>ACTIVITY REGULATION</scope>
    <scope>INTERACTION WITH NCOA2</scope>
</reference>
<reference evidence="58" key="30">
    <citation type="journal article" date="2020" name="Bioorg. Med. Chem. Lett.">
        <title>Development of a new class of liver receptor homolog-1 (LRH-1) agonists by photoredox conjugate addition.</title>
        <authorList>
            <person name="Cornelison J.L."/>
            <person name="Cato M.L."/>
            <person name="Johnson A.M."/>
            <person name="D'Agostino E.H."/>
            <person name="Melchers D."/>
            <person name="Patel A.B."/>
            <person name="Mays S.G."/>
            <person name="Houtman R."/>
            <person name="Ortlund E.A."/>
            <person name="Jui N.T."/>
        </authorList>
    </citation>
    <scope>X-RAY CRYSTALLOGRAPHY (2.26 ANGSTROMS) OF 299-541 IN COMPLEX WITH NCOA2</scope>
    <scope>INTERACTION WITH NCOA2</scope>
</reference>
<reference evidence="59" key="31">
    <citation type="journal article" date="2022" name="J. Med. Chem.">
        <title>Differential modulation of nuclear receptor LRH-1 through targeting buried and surface regions of the binding pocket.</title>
        <authorList>
            <person name="Cato M.L."/>
            <person name="Cornelison J.L."/>
            <person name="Spurlin R.M."/>
            <person name="Courouble V.V."/>
            <person name="Patel A.B."/>
            <person name="Flynn A.R."/>
            <person name="Johnson A.M."/>
            <person name="Okafor C.D."/>
            <person name="Frank F."/>
            <person name="D'Agostino E.H."/>
            <person name="Griffin P.R."/>
            <person name="Jui N.T."/>
            <person name="Ortlund E.A."/>
        </authorList>
    </citation>
    <scope>X-RAY CRYSTALLOGRAPHY (2.80 ANGSTROMS) OF 299-541 IN COMPLEX WITH NCOA2</scope>
    <scope>INTERACTION WITH NCOA2</scope>
</reference>
<reference evidence="60" key="32">
    <citation type="journal article" date="2024" name="Nat. Struct. Mol. Biol.">
        <title>Nucleosome-bound NR5A2 structure reveals pioneer factor mechanism by DNA minor groove anchor competition.</title>
        <authorList>
            <person name="Kobayashi W."/>
            <person name="Sappler A.H."/>
            <person name="Bollschweiler D."/>
            <person name="Kuemmecke M."/>
            <person name="Basquin J."/>
            <person name="Arslantas E.N."/>
            <person name="Ruangroengkulrith S."/>
            <person name="Hornberger R."/>
            <person name="Duderstadt K."/>
            <person name="Tachibana K."/>
        </authorList>
    </citation>
    <scope>STRUCTURE BY ELECTRON MICROSCOPY (2.58 ANGSTROMS) OF 85-178 IN COMPLEX WITH NUCLEOSOME AND ZINC</scope>
    <scope>FUNCTION</scope>
    <scope>SUBUNIT</scope>
    <scope>DOMAIN</scope>
    <scope>MUTAGENESIS OF ASP-159 AND ARG-162</scope>
</reference>
<dbReference type="EMBL" id="U80251">
    <property type="protein sequence ID" value="AAC78727.1"/>
    <property type="molecule type" value="mRNA"/>
</dbReference>
<dbReference type="EMBL" id="AF146343">
    <property type="protein sequence ID" value="AAD37378.1"/>
    <property type="molecule type" value="mRNA"/>
</dbReference>
<dbReference type="EMBL" id="AF124247">
    <property type="protein sequence ID" value="AAD26565.1"/>
    <property type="molecule type" value="mRNA"/>
</dbReference>
<dbReference type="EMBL" id="AF190464">
    <property type="protein sequence ID" value="AAG17124.1"/>
    <property type="molecule type" value="Genomic_DNA"/>
</dbReference>
<dbReference type="EMBL" id="AF190464">
    <property type="protein sequence ID" value="AAG17125.1"/>
    <property type="molecule type" value="Genomic_DNA"/>
</dbReference>
<dbReference type="EMBL" id="AK304365">
    <property type="protein sequence ID" value="BAG65205.1"/>
    <property type="molecule type" value="mRNA"/>
</dbReference>
<dbReference type="EMBL" id="AK316513">
    <property type="protein sequence ID" value="BAH14884.1"/>
    <property type="molecule type" value="mRNA"/>
</dbReference>
<dbReference type="EMBL" id="AC096633">
    <property type="status" value="NOT_ANNOTATED_CDS"/>
    <property type="molecule type" value="Genomic_DNA"/>
</dbReference>
<dbReference type="EMBL" id="CH471067">
    <property type="protein sequence ID" value="EAW91306.1"/>
    <property type="molecule type" value="Genomic_DNA"/>
</dbReference>
<dbReference type="EMBL" id="BC118571">
    <property type="protein sequence ID" value="AAI18572.1"/>
    <property type="molecule type" value="mRNA"/>
</dbReference>
<dbReference type="EMBL" id="BC118652">
    <property type="protein sequence ID" value="AAI18653.1"/>
    <property type="molecule type" value="mRNA"/>
</dbReference>
<dbReference type="EMBL" id="U93553">
    <property type="protein sequence ID" value="AAD03155.1"/>
    <property type="molecule type" value="mRNA"/>
</dbReference>
<dbReference type="CCDS" id="CCDS1400.1">
    <molecule id="O00482-2"/>
</dbReference>
<dbReference type="CCDS" id="CCDS1401.1">
    <molecule id="O00482-1"/>
</dbReference>
<dbReference type="CCDS" id="CCDS60383.1">
    <molecule id="O00482-4"/>
</dbReference>
<dbReference type="RefSeq" id="NP_001263393.1">
    <molecule id="O00482-4"/>
    <property type="nucleotide sequence ID" value="NM_001276464.2"/>
</dbReference>
<dbReference type="RefSeq" id="NP_003813.1">
    <molecule id="O00482-2"/>
    <property type="nucleotide sequence ID" value="NM_003822.5"/>
</dbReference>
<dbReference type="RefSeq" id="NP_995582.1">
    <molecule id="O00482-1"/>
    <property type="nucleotide sequence ID" value="NM_205860.3"/>
</dbReference>
<dbReference type="RefSeq" id="XP_005245119.1">
    <molecule id="O00482-4"/>
    <property type="nucleotide sequence ID" value="XM_005245062.4"/>
</dbReference>
<dbReference type="RefSeq" id="XP_011507684.1">
    <property type="nucleotide sequence ID" value="XM_011509382.1"/>
</dbReference>
<dbReference type="RefSeq" id="XP_054191726.1">
    <molecule id="O00482-4"/>
    <property type="nucleotide sequence ID" value="XM_054335751.1"/>
</dbReference>
<dbReference type="PDB" id="1YOK">
    <property type="method" value="X-ray"/>
    <property type="resolution" value="2.50 A"/>
    <property type="chains" value="A=300-541"/>
</dbReference>
<dbReference type="PDB" id="1YUC">
    <property type="method" value="X-ray"/>
    <property type="resolution" value="1.90 A"/>
    <property type="chains" value="A/B=290-541"/>
</dbReference>
<dbReference type="PDB" id="1ZDU">
    <property type="method" value="X-ray"/>
    <property type="resolution" value="2.50 A"/>
    <property type="chains" value="A=297-541"/>
</dbReference>
<dbReference type="PDB" id="2A66">
    <property type="method" value="X-ray"/>
    <property type="resolution" value="2.20 A"/>
    <property type="chains" value="A=79-187"/>
</dbReference>
<dbReference type="PDB" id="3PLZ">
    <property type="method" value="X-ray"/>
    <property type="resolution" value="1.75 A"/>
    <property type="chains" value="A/B=300-541"/>
</dbReference>
<dbReference type="PDB" id="3TX7">
    <property type="method" value="X-ray"/>
    <property type="resolution" value="2.76 A"/>
    <property type="chains" value="B=191-541"/>
</dbReference>
<dbReference type="PDB" id="4DOR">
    <property type="method" value="X-ray"/>
    <property type="resolution" value="1.90 A"/>
    <property type="chains" value="A/B=290-541"/>
</dbReference>
<dbReference type="PDB" id="4DOS">
    <property type="method" value="X-ray"/>
    <property type="resolution" value="2.00 A"/>
    <property type="chains" value="A=299-538"/>
</dbReference>
<dbReference type="PDB" id="4IS8">
    <property type="method" value="X-ray"/>
    <property type="resolution" value="2.78 A"/>
    <property type="chains" value="A/B=300-538"/>
</dbReference>
<dbReference type="PDB" id="4ONI">
    <property type="method" value="X-ray"/>
    <property type="resolution" value="1.80 A"/>
    <property type="chains" value="A/B=291-541"/>
</dbReference>
<dbReference type="PDB" id="4PLD">
    <property type="method" value="X-ray"/>
    <property type="resolution" value="1.75 A"/>
    <property type="chains" value="A=301-541"/>
</dbReference>
<dbReference type="PDB" id="4PLE">
    <property type="method" value="X-ray"/>
    <property type="resolution" value="1.75 A"/>
    <property type="chains" value="A/C/E/G=301-541"/>
</dbReference>
<dbReference type="PDB" id="4RWV">
    <property type="method" value="X-ray"/>
    <property type="resolution" value="1.86 A"/>
    <property type="chains" value="A=294-541"/>
</dbReference>
<dbReference type="PDB" id="5L0M">
    <property type="method" value="X-ray"/>
    <property type="resolution" value="2.20 A"/>
    <property type="chains" value="A=79-187"/>
</dbReference>
<dbReference type="PDB" id="5L11">
    <property type="method" value="X-ray"/>
    <property type="resolution" value="1.85 A"/>
    <property type="chains" value="A=299-541"/>
</dbReference>
<dbReference type="PDB" id="5SYZ">
    <property type="method" value="X-ray"/>
    <property type="resolution" value="1.93 A"/>
    <property type="chains" value="A=297-538"/>
</dbReference>
<dbReference type="PDB" id="5UNJ">
    <property type="method" value="X-ray"/>
    <property type="resolution" value="1.96 A"/>
    <property type="chains" value="A=299-541"/>
</dbReference>
<dbReference type="PDB" id="6OQX">
    <property type="method" value="X-ray"/>
    <property type="resolution" value="2.00 A"/>
    <property type="chains" value="A=299-541"/>
</dbReference>
<dbReference type="PDB" id="6OQY">
    <property type="method" value="X-ray"/>
    <property type="resolution" value="2.23 A"/>
    <property type="chains" value="A=299-541"/>
</dbReference>
<dbReference type="PDB" id="6OR1">
    <property type="method" value="X-ray"/>
    <property type="resolution" value="2.17 A"/>
    <property type="chains" value="A=299-541"/>
</dbReference>
<dbReference type="PDB" id="6VC2">
    <property type="method" value="X-ray"/>
    <property type="resolution" value="1.70 A"/>
    <property type="chains" value="A=299-541"/>
</dbReference>
<dbReference type="PDB" id="6VIF">
    <property type="method" value="X-ray"/>
    <property type="resolution" value="2.26 A"/>
    <property type="chains" value="A=299-541"/>
</dbReference>
<dbReference type="PDB" id="7JYD">
    <property type="method" value="X-ray"/>
    <property type="resolution" value="2.30 A"/>
    <property type="chains" value="A=299-541"/>
</dbReference>
<dbReference type="PDB" id="7JYE">
    <property type="method" value="X-ray"/>
    <property type="resolution" value="2.55 A"/>
    <property type="chains" value="A=299-541"/>
</dbReference>
<dbReference type="PDB" id="7TT8">
    <property type="method" value="X-ray"/>
    <property type="resolution" value="2.80 A"/>
    <property type="chains" value="A=299-541"/>
</dbReference>
<dbReference type="PDB" id="8F8M">
    <property type="method" value="X-ray"/>
    <property type="resolution" value="2.60 A"/>
    <property type="chains" value="A=299-541"/>
</dbReference>
<dbReference type="PDB" id="8PKI">
    <property type="method" value="EM"/>
    <property type="resolution" value="2.58 A"/>
    <property type="chains" value="K=85-178"/>
</dbReference>
<dbReference type="PDBsum" id="1YOK"/>
<dbReference type="PDBsum" id="1YUC"/>
<dbReference type="PDBsum" id="1ZDU"/>
<dbReference type="PDBsum" id="2A66"/>
<dbReference type="PDBsum" id="3PLZ"/>
<dbReference type="PDBsum" id="3TX7"/>
<dbReference type="PDBsum" id="4DOR"/>
<dbReference type="PDBsum" id="4DOS"/>
<dbReference type="PDBsum" id="4IS8"/>
<dbReference type="PDBsum" id="4ONI"/>
<dbReference type="PDBsum" id="4PLD"/>
<dbReference type="PDBsum" id="4PLE"/>
<dbReference type="PDBsum" id="4RWV"/>
<dbReference type="PDBsum" id="5L0M"/>
<dbReference type="PDBsum" id="5L11"/>
<dbReference type="PDBsum" id="5SYZ"/>
<dbReference type="PDBsum" id="5UNJ"/>
<dbReference type="PDBsum" id="6OQX"/>
<dbReference type="PDBsum" id="6OQY"/>
<dbReference type="PDBsum" id="6OR1"/>
<dbReference type="PDBsum" id="6VC2"/>
<dbReference type="PDBsum" id="6VIF"/>
<dbReference type="PDBsum" id="7JYD"/>
<dbReference type="PDBsum" id="7JYE"/>
<dbReference type="PDBsum" id="7TT8"/>
<dbReference type="PDBsum" id="8F8M"/>
<dbReference type="PDBsum" id="8PKI"/>
<dbReference type="EMDB" id="EMD-17740"/>
<dbReference type="SASBDB" id="O00482"/>
<dbReference type="SMR" id="O00482"/>
<dbReference type="BioGRID" id="108772">
    <property type="interactions" value="38"/>
</dbReference>
<dbReference type="CORUM" id="O00482"/>
<dbReference type="DIP" id="DIP-37952N"/>
<dbReference type="FunCoup" id="O00482">
    <property type="interactions" value="2483"/>
</dbReference>
<dbReference type="IntAct" id="O00482">
    <property type="interactions" value="11"/>
</dbReference>
<dbReference type="MINT" id="O00482"/>
<dbReference type="STRING" id="9606.ENSP00000356331"/>
<dbReference type="BindingDB" id="O00482"/>
<dbReference type="ChEMBL" id="CHEMBL3544"/>
<dbReference type="GuidetoPHARMACOLOGY" id="633"/>
<dbReference type="SwissLipids" id="SLP:000001542"/>
<dbReference type="TCDB" id="9.B.208.1.4">
    <property type="family name" value="the vitamin d3 receptor (vdr) family"/>
</dbReference>
<dbReference type="iPTMnet" id="O00482"/>
<dbReference type="PhosphoSitePlus" id="O00482"/>
<dbReference type="BioMuta" id="NR5A2"/>
<dbReference type="jPOST" id="O00482"/>
<dbReference type="MassIVE" id="O00482"/>
<dbReference type="PaxDb" id="9606-ENSP00000356331"/>
<dbReference type="PeptideAtlas" id="O00482"/>
<dbReference type="ProteomicsDB" id="47928">
    <molecule id="O00482-1"/>
</dbReference>
<dbReference type="ProteomicsDB" id="47929">
    <molecule id="O00482-2"/>
</dbReference>
<dbReference type="ProteomicsDB" id="47930">
    <molecule id="O00482-3"/>
</dbReference>
<dbReference type="ProteomicsDB" id="5842"/>
<dbReference type="Antibodypedia" id="1690">
    <property type="antibodies" value="490 antibodies from 39 providers"/>
</dbReference>
<dbReference type="DNASU" id="2494"/>
<dbReference type="Ensembl" id="ENST00000236914.7">
    <molecule id="O00482-2"/>
    <property type="protein sequence ID" value="ENSP00000236914.3"/>
    <property type="gene ID" value="ENSG00000116833.14"/>
</dbReference>
<dbReference type="Ensembl" id="ENST00000367362.8">
    <molecule id="O00482-1"/>
    <property type="protein sequence ID" value="ENSP00000356331.3"/>
    <property type="gene ID" value="ENSG00000116833.14"/>
</dbReference>
<dbReference type="Ensembl" id="ENST00000544748.5">
    <molecule id="O00482-4"/>
    <property type="protein sequence ID" value="ENSP00000439116.1"/>
    <property type="gene ID" value="ENSG00000116833.14"/>
</dbReference>
<dbReference type="GeneID" id="2494"/>
<dbReference type="KEGG" id="hsa:2494"/>
<dbReference type="MANE-Select" id="ENST00000367362.8">
    <property type="protein sequence ID" value="ENSP00000356331.3"/>
    <property type="RefSeq nucleotide sequence ID" value="NM_205860.3"/>
    <property type="RefSeq protein sequence ID" value="NP_995582.1"/>
</dbReference>
<dbReference type="UCSC" id="uc001gvb.5">
    <molecule id="O00482-1"/>
    <property type="organism name" value="human"/>
</dbReference>
<dbReference type="AGR" id="HGNC:7984"/>
<dbReference type="CTD" id="2494"/>
<dbReference type="DisGeNET" id="2494"/>
<dbReference type="GeneCards" id="NR5A2"/>
<dbReference type="HGNC" id="HGNC:7984">
    <property type="gene designation" value="NR5A2"/>
</dbReference>
<dbReference type="HPA" id="ENSG00000116833">
    <property type="expression patterns" value="Group enriched (intestine, liver, pancreas)"/>
</dbReference>
<dbReference type="MIM" id="604453">
    <property type="type" value="gene"/>
</dbReference>
<dbReference type="neXtProt" id="NX_O00482"/>
<dbReference type="OpenTargets" id="ENSG00000116833"/>
<dbReference type="PharmGKB" id="PA31765"/>
<dbReference type="VEuPathDB" id="HostDB:ENSG00000116833"/>
<dbReference type="eggNOG" id="KOG4218">
    <property type="taxonomic scope" value="Eukaryota"/>
</dbReference>
<dbReference type="GeneTree" id="ENSGT00940000153391"/>
<dbReference type="HOGENOM" id="CLU_011437_0_0_1"/>
<dbReference type="InParanoid" id="O00482"/>
<dbReference type="OMA" id="GHMPRNL"/>
<dbReference type="OrthoDB" id="5984981at2759"/>
<dbReference type="PAN-GO" id="O00482">
    <property type="GO annotations" value="5 GO annotations based on evolutionary models"/>
</dbReference>
<dbReference type="PhylomeDB" id="O00482"/>
<dbReference type="TreeFam" id="TF350737"/>
<dbReference type="PathwayCommons" id="O00482"/>
<dbReference type="Reactome" id="R-HSA-210747">
    <molecule id="O00482-1"/>
    <property type="pathway name" value="Regulation of gene expression in early pancreatic precursor cells"/>
</dbReference>
<dbReference type="Reactome" id="R-HSA-383280">
    <property type="pathway name" value="Nuclear Receptor transcription pathway"/>
</dbReference>
<dbReference type="Reactome" id="R-HSA-4090294">
    <molecule id="O00482-2"/>
    <property type="pathway name" value="SUMOylation of intracellular receptors"/>
</dbReference>
<dbReference type="Reactome" id="R-HSA-9018519">
    <property type="pathway name" value="Estrogen-dependent gene expression"/>
</dbReference>
<dbReference type="SignaLink" id="O00482"/>
<dbReference type="SIGNOR" id="O00482"/>
<dbReference type="BioGRID-ORCS" id="2494">
    <property type="hits" value="19 hits in 1173 CRISPR screens"/>
</dbReference>
<dbReference type="ChiTaRS" id="NR5A2">
    <property type="organism name" value="human"/>
</dbReference>
<dbReference type="EvolutionaryTrace" id="O00482"/>
<dbReference type="GeneWiki" id="Liver_receptor_homolog-1"/>
<dbReference type="GenomeRNAi" id="2494"/>
<dbReference type="Pharos" id="O00482">
    <property type="development level" value="Tchem"/>
</dbReference>
<dbReference type="PRO" id="PR:O00482"/>
<dbReference type="Proteomes" id="UP000005640">
    <property type="component" value="Chromosome 1"/>
</dbReference>
<dbReference type="RNAct" id="O00482">
    <property type="molecule type" value="protein"/>
</dbReference>
<dbReference type="Bgee" id="ENSG00000116833">
    <property type="expression patterns" value="Expressed in body of pancreas and 105 other cell types or tissues"/>
</dbReference>
<dbReference type="ExpressionAtlas" id="O00482">
    <property type="expression patterns" value="baseline and differential"/>
</dbReference>
<dbReference type="GO" id="GO:0000785">
    <property type="term" value="C:chromatin"/>
    <property type="evidence" value="ECO:0000247"/>
    <property type="project" value="NTNU_SB"/>
</dbReference>
<dbReference type="GO" id="GO:0005737">
    <property type="term" value="C:cytoplasm"/>
    <property type="evidence" value="ECO:0000314"/>
    <property type="project" value="BHF-UCL"/>
</dbReference>
<dbReference type="GO" id="GO:0005654">
    <property type="term" value="C:nucleoplasm"/>
    <property type="evidence" value="ECO:0000304"/>
    <property type="project" value="Reactome"/>
</dbReference>
<dbReference type="GO" id="GO:0005634">
    <property type="term" value="C:nucleus"/>
    <property type="evidence" value="ECO:0000314"/>
    <property type="project" value="UniProtKB"/>
</dbReference>
<dbReference type="GO" id="GO:0090575">
    <property type="term" value="C:RNA polymerase II transcription regulator complex"/>
    <property type="evidence" value="ECO:0000250"/>
    <property type="project" value="BHF-UCL"/>
</dbReference>
<dbReference type="GO" id="GO:0003682">
    <property type="term" value="F:chromatin binding"/>
    <property type="evidence" value="ECO:0000250"/>
    <property type="project" value="BHF-UCL"/>
</dbReference>
<dbReference type="GO" id="GO:0003677">
    <property type="term" value="F:DNA binding"/>
    <property type="evidence" value="ECO:0000314"/>
    <property type="project" value="UniProtKB"/>
</dbReference>
<dbReference type="GO" id="GO:0001228">
    <property type="term" value="F:DNA-binding transcription activator activity, RNA polymerase II-specific"/>
    <property type="evidence" value="ECO:0007669"/>
    <property type="project" value="Ensembl"/>
</dbReference>
<dbReference type="GO" id="GO:0003700">
    <property type="term" value="F:DNA-binding transcription factor activity"/>
    <property type="evidence" value="ECO:0000314"/>
    <property type="project" value="UniProtKB"/>
</dbReference>
<dbReference type="GO" id="GO:0000981">
    <property type="term" value="F:DNA-binding transcription factor activity, RNA polymerase II-specific"/>
    <property type="evidence" value="ECO:0000247"/>
    <property type="project" value="NTNU_SB"/>
</dbReference>
<dbReference type="GO" id="GO:0004879">
    <property type="term" value="F:nuclear receptor activity"/>
    <property type="evidence" value="ECO:0000314"/>
    <property type="project" value="UniProtKB"/>
</dbReference>
<dbReference type="GO" id="GO:0005543">
    <property type="term" value="F:phospholipid binding"/>
    <property type="evidence" value="ECO:0000314"/>
    <property type="project" value="UniProtKB"/>
</dbReference>
<dbReference type="GO" id="GO:0000978">
    <property type="term" value="F:RNA polymerase II cis-regulatory region sequence-specific DNA binding"/>
    <property type="evidence" value="ECO:0000250"/>
    <property type="project" value="BHF-UCL"/>
</dbReference>
<dbReference type="GO" id="GO:0043565">
    <property type="term" value="F:sequence-specific DNA binding"/>
    <property type="evidence" value="ECO:0000314"/>
    <property type="project" value="UniProtKB"/>
</dbReference>
<dbReference type="GO" id="GO:1990837">
    <property type="term" value="F:sequence-specific double-stranded DNA binding"/>
    <property type="evidence" value="ECO:0000314"/>
    <property type="project" value="ARUK-UCL"/>
</dbReference>
<dbReference type="GO" id="GO:0000976">
    <property type="term" value="F:transcription cis-regulatory region binding"/>
    <property type="evidence" value="ECO:0000314"/>
    <property type="project" value="BHF-UCL"/>
</dbReference>
<dbReference type="GO" id="GO:0001221">
    <property type="term" value="F:transcription coregulator binding"/>
    <property type="evidence" value="ECO:0000353"/>
    <property type="project" value="UniProtKB"/>
</dbReference>
<dbReference type="GO" id="GO:0008270">
    <property type="term" value="F:zinc ion binding"/>
    <property type="evidence" value="ECO:0007669"/>
    <property type="project" value="UniProtKB-KW"/>
</dbReference>
<dbReference type="GO" id="GO:0090425">
    <property type="term" value="P:acinar cell differentiation"/>
    <property type="evidence" value="ECO:0007669"/>
    <property type="project" value="Ensembl"/>
</dbReference>
<dbReference type="GO" id="GO:0008206">
    <property type="term" value="P:bile acid metabolic process"/>
    <property type="evidence" value="ECO:0000314"/>
    <property type="project" value="UniProtKB"/>
</dbReference>
<dbReference type="GO" id="GO:0097720">
    <property type="term" value="P:calcineurin-mediated signaling"/>
    <property type="evidence" value="ECO:0007669"/>
    <property type="project" value="Ensembl"/>
</dbReference>
<dbReference type="GO" id="GO:0051216">
    <property type="term" value="P:cartilage development"/>
    <property type="evidence" value="ECO:0007669"/>
    <property type="project" value="Ensembl"/>
</dbReference>
<dbReference type="GO" id="GO:1990830">
    <property type="term" value="P:cellular response to leukemia inhibitory factor"/>
    <property type="evidence" value="ECO:0007669"/>
    <property type="project" value="Ensembl"/>
</dbReference>
<dbReference type="GO" id="GO:0042632">
    <property type="term" value="P:cholesterol homeostasis"/>
    <property type="evidence" value="ECO:0007669"/>
    <property type="project" value="Ensembl"/>
</dbReference>
<dbReference type="GO" id="GO:0006338">
    <property type="term" value="P:chromatin remodeling"/>
    <property type="evidence" value="ECO:0000314"/>
    <property type="project" value="UniProtKB"/>
</dbReference>
<dbReference type="GO" id="GO:0009792">
    <property type="term" value="P:embryo development ending in birth or egg hatching"/>
    <property type="evidence" value="ECO:0000304"/>
    <property type="project" value="UniProtKB"/>
</dbReference>
<dbReference type="GO" id="GO:0040016">
    <property type="term" value="P:embryonic cleavage"/>
    <property type="evidence" value="ECO:0000250"/>
    <property type="project" value="UniProtKB"/>
</dbReference>
<dbReference type="GO" id="GO:0031017">
    <property type="term" value="P:exocrine pancreas development"/>
    <property type="evidence" value="ECO:0000250"/>
    <property type="project" value="UniProtKB"/>
</dbReference>
<dbReference type="GO" id="GO:0042592">
    <property type="term" value="P:homeostatic process"/>
    <property type="evidence" value="ECO:0000303"/>
    <property type="project" value="UniProtKB"/>
</dbReference>
<dbReference type="GO" id="GO:0009755">
    <property type="term" value="P:hormone-mediated signaling pathway"/>
    <property type="evidence" value="ECO:0000318"/>
    <property type="project" value="GO_Central"/>
</dbReference>
<dbReference type="GO" id="GO:0001826">
    <property type="term" value="P:inner cell mass cell differentiation"/>
    <property type="evidence" value="ECO:0000250"/>
    <property type="project" value="UniProtKB"/>
</dbReference>
<dbReference type="GO" id="GO:0140001">
    <property type="term" value="P:morula formation"/>
    <property type="evidence" value="ECO:0000250"/>
    <property type="project" value="UniProtKB"/>
</dbReference>
<dbReference type="GO" id="GO:0032331">
    <property type="term" value="P:negative regulation of chondrocyte differentiation"/>
    <property type="evidence" value="ECO:0000250"/>
    <property type="project" value="UniProtKB"/>
</dbReference>
<dbReference type="GO" id="GO:0050728">
    <property type="term" value="P:negative regulation of inflammatory response"/>
    <property type="evidence" value="ECO:0000250"/>
    <property type="project" value="UniProtKB"/>
</dbReference>
<dbReference type="GO" id="GO:0022008">
    <property type="term" value="P:neurogenesis"/>
    <property type="evidence" value="ECO:0000250"/>
    <property type="project" value="UniProtKB"/>
</dbReference>
<dbReference type="GO" id="GO:0061113">
    <property type="term" value="P:pancreas morphogenesis"/>
    <property type="evidence" value="ECO:0007669"/>
    <property type="project" value="Ensembl"/>
</dbReference>
<dbReference type="GO" id="GO:0045893">
    <property type="term" value="P:positive regulation of DNA-templated transcription"/>
    <property type="evidence" value="ECO:0000314"/>
    <property type="project" value="BHF-UCL"/>
</dbReference>
<dbReference type="GO" id="GO:0031948">
    <property type="term" value="P:positive regulation of glucocorticoid biosynthetic process"/>
    <property type="evidence" value="ECO:0000250"/>
    <property type="project" value="UniProtKB"/>
</dbReference>
<dbReference type="GO" id="GO:2000738">
    <property type="term" value="P:positive regulation of stem cell differentiation"/>
    <property type="evidence" value="ECO:0000250"/>
    <property type="project" value="UniProtKB"/>
</dbReference>
<dbReference type="GO" id="GO:0050870">
    <property type="term" value="P:positive regulation of T cell activation"/>
    <property type="evidence" value="ECO:0000250"/>
    <property type="project" value="UniProtKB"/>
</dbReference>
<dbReference type="GO" id="GO:0002669">
    <property type="term" value="P:positive regulation of T cell anergy"/>
    <property type="evidence" value="ECO:0000250"/>
    <property type="project" value="UniProtKB"/>
</dbReference>
<dbReference type="GO" id="GO:0042102">
    <property type="term" value="P:positive regulation of T cell proliferation"/>
    <property type="evidence" value="ECO:0000250"/>
    <property type="project" value="UniProtKB"/>
</dbReference>
<dbReference type="GO" id="GO:2001051">
    <property type="term" value="P:positive regulation of tendon cell differentiation"/>
    <property type="evidence" value="ECO:0000250"/>
    <property type="project" value="UniProtKB"/>
</dbReference>
<dbReference type="GO" id="GO:0045944">
    <property type="term" value="P:positive regulation of transcription by RNA polymerase II"/>
    <property type="evidence" value="ECO:0000314"/>
    <property type="project" value="UniProtKB"/>
</dbReference>
<dbReference type="GO" id="GO:0045070">
    <property type="term" value="P:positive regulation of viral genome replication"/>
    <property type="evidence" value="ECO:0000314"/>
    <property type="project" value="BHF-UCL"/>
</dbReference>
<dbReference type="GO" id="GO:0001545">
    <property type="term" value="P:primary ovarian follicle growth"/>
    <property type="evidence" value="ECO:0000250"/>
    <property type="project" value="UniProtKB"/>
</dbReference>
<dbReference type="GO" id="GO:0006355">
    <property type="term" value="P:regulation of DNA-templated transcription"/>
    <property type="evidence" value="ECO:0000314"/>
    <property type="project" value="UniProtKB"/>
</dbReference>
<dbReference type="GO" id="GO:0006357">
    <property type="term" value="P:regulation of transcription by RNA polymerase II"/>
    <property type="evidence" value="ECO:0000318"/>
    <property type="project" value="GO_Central"/>
</dbReference>
<dbReference type="GO" id="GO:0060009">
    <property type="term" value="P:Sertoli cell development"/>
    <property type="evidence" value="ECO:0000250"/>
    <property type="project" value="UniProtKB"/>
</dbReference>
<dbReference type="GO" id="GO:0035019">
    <property type="term" value="P:somatic stem cell population maintenance"/>
    <property type="evidence" value="ECO:0000250"/>
    <property type="project" value="UniProtKB"/>
</dbReference>
<dbReference type="GO" id="GO:0007283">
    <property type="term" value="P:spermatogenesis"/>
    <property type="evidence" value="ECO:0000250"/>
    <property type="project" value="UniProtKB"/>
</dbReference>
<dbReference type="GO" id="GO:0009888">
    <property type="term" value="P:tissue development"/>
    <property type="evidence" value="ECO:0000318"/>
    <property type="project" value="GO_Central"/>
</dbReference>
<dbReference type="GO" id="GO:0141064">
    <property type="term" value="P:zygotic genome activation"/>
    <property type="evidence" value="ECO:0000250"/>
    <property type="project" value="UniProtKB"/>
</dbReference>
<dbReference type="CDD" id="cd07167">
    <property type="entry name" value="NR_DBD_Lrh-1_like"/>
    <property type="match status" value="1"/>
</dbReference>
<dbReference type="CDD" id="cd07069">
    <property type="entry name" value="NR_LBD_Lrh-1"/>
    <property type="match status" value="1"/>
</dbReference>
<dbReference type="FunFam" id="3.30.50.10:FF:000006">
    <property type="entry name" value="Nuclear receptor subfamily 5 group A member"/>
    <property type="match status" value="1"/>
</dbReference>
<dbReference type="FunFam" id="1.10.565.10:FF:000011">
    <property type="entry name" value="Nuclear receptor subfamily 5, group A, member 2"/>
    <property type="match status" value="1"/>
</dbReference>
<dbReference type="Gene3D" id="3.30.50.10">
    <property type="entry name" value="Erythroid Transcription Factor GATA-1, subunit A"/>
    <property type="match status" value="1"/>
</dbReference>
<dbReference type="Gene3D" id="1.10.565.10">
    <property type="entry name" value="Retinoid X Receptor"/>
    <property type="match status" value="1"/>
</dbReference>
<dbReference type="IDEAL" id="IID00001"/>
<dbReference type="InterPro" id="IPR035500">
    <property type="entry name" value="NHR-like_dom_sf"/>
</dbReference>
<dbReference type="InterPro" id="IPR016355">
    <property type="entry name" value="NR5-like"/>
</dbReference>
<dbReference type="InterPro" id="IPR000536">
    <property type="entry name" value="Nucl_hrmn_rcpt_lig-bd"/>
</dbReference>
<dbReference type="InterPro" id="IPR001723">
    <property type="entry name" value="Nuclear_hrmn_rcpt"/>
</dbReference>
<dbReference type="InterPro" id="IPR001628">
    <property type="entry name" value="Znf_hrmn_rcpt"/>
</dbReference>
<dbReference type="InterPro" id="IPR013088">
    <property type="entry name" value="Znf_NHR/GATA"/>
</dbReference>
<dbReference type="PANTHER" id="PTHR24086">
    <property type="entry name" value="NUCLEAR RECEPTOR SUBFAMILY 5 GROUP A"/>
    <property type="match status" value="1"/>
</dbReference>
<dbReference type="PANTHER" id="PTHR24086:SF18">
    <property type="entry name" value="NUCLEAR RECEPTOR SUBFAMILY 5 GROUP A MEMBER 2"/>
    <property type="match status" value="1"/>
</dbReference>
<dbReference type="Pfam" id="PF00104">
    <property type="entry name" value="Hormone_recep"/>
    <property type="match status" value="1"/>
</dbReference>
<dbReference type="Pfam" id="PF00105">
    <property type="entry name" value="zf-C4"/>
    <property type="match status" value="1"/>
</dbReference>
<dbReference type="PIRSF" id="PIRSF002530">
    <property type="entry name" value="Nuc_orph_FTZ-F1"/>
    <property type="match status" value="1"/>
</dbReference>
<dbReference type="PRINTS" id="PR00398">
    <property type="entry name" value="STRDHORMONER"/>
</dbReference>
<dbReference type="PRINTS" id="PR00047">
    <property type="entry name" value="STROIDFINGER"/>
</dbReference>
<dbReference type="SMART" id="SM00430">
    <property type="entry name" value="HOLI"/>
    <property type="match status" value="1"/>
</dbReference>
<dbReference type="SMART" id="SM00399">
    <property type="entry name" value="ZnF_C4"/>
    <property type="match status" value="1"/>
</dbReference>
<dbReference type="SUPFAM" id="SSF57716">
    <property type="entry name" value="Glucocorticoid receptor-like (DNA-binding domain)"/>
    <property type="match status" value="1"/>
</dbReference>
<dbReference type="SUPFAM" id="SSF48508">
    <property type="entry name" value="Nuclear receptor ligand-binding domain"/>
    <property type="match status" value="1"/>
</dbReference>
<dbReference type="PROSITE" id="PS51843">
    <property type="entry name" value="NR_LBD"/>
    <property type="match status" value="1"/>
</dbReference>
<dbReference type="PROSITE" id="PS00031">
    <property type="entry name" value="NUCLEAR_REC_DBD_1"/>
    <property type="match status" value="1"/>
</dbReference>
<dbReference type="PROSITE" id="PS51030">
    <property type="entry name" value="NUCLEAR_REC_DBD_2"/>
    <property type="match status" value="1"/>
</dbReference>
<sequence length="541" mass="61331">MSSNSDTGDLQESLKHGLTPIGAGLPDRHGSPIPARGRLVMLPKVETEALGLARSHGEQGQMPENMQVSQFKMVNYSYDEDLEELCPVCGDKVSGYHYGLLTCESCKGFFKRTVQNNKRYTCIENQNCQIDKTQRKRCPYCRFQKCLSVGMKLEAVRADRMRGGRNKFGPMYKRDRALKQQKKALIRANGLKLEAMSQVIQAMPSDLTISSAIQNIHSASKGLPLNHAALPPTDYDRSPFVTSPISMTMPPHGSLQGYQTYGHFPSRAIKSEYPDPYTSSPESIMGYSYMDSYQTSSPASIPHLILELLKCEPDEPQVQAKIMAYLQQEQANRSKHEKLSTFGLMCKMADQTLFSIVEWARSSIFFRELKVDDQMKLLQNCWSELLILDHIYRQVVHGKEGSIFLVTGQQVDYSIIASQAGATLNNLMSHAQELVAKLRSLQFDQREFVCLKFLVLFSLDVKNLENFQLVEGVQEQVNAALLDYTMCNYPQQTEKFGQLLLRLPEIRAISMQAEEYLYYKHLNGDVPYNNLLIEMLHAKRA</sequence>
<feature type="chain" id="PRO_0000053735" description="Nuclear receptor subfamily 5 group A member 2">
    <location>
        <begin position="1"/>
        <end position="541"/>
    </location>
</feature>
<feature type="domain" description="NR LBD" evidence="3">
    <location>
        <begin position="300"/>
        <end position="539"/>
    </location>
</feature>
<feature type="DNA-binding region" description="Nuclear receptor" evidence="2">
    <location>
        <begin position="83"/>
        <end position="154"/>
    </location>
</feature>
<feature type="zinc finger region" description="NR C4-type" evidence="2">
    <location>
        <begin position="86"/>
        <end position="106"/>
    </location>
</feature>
<feature type="zinc finger region" description="NR C4-type" evidence="2">
    <location>
        <begin position="122"/>
        <end position="146"/>
    </location>
</feature>
<feature type="region of interest" description="Disordered" evidence="4">
    <location>
        <begin position="1"/>
        <end position="35"/>
    </location>
</feature>
<feature type="region of interest" description="C-terminal extension (CTE)" evidence="28">
    <location>
        <begin position="152"/>
        <end position="167"/>
    </location>
</feature>
<feature type="region of interest" description="AF-2" evidence="3">
    <location>
        <begin position="528"/>
        <end position="539"/>
    </location>
</feature>
<feature type="short sequence motif" description="FTZ-F1 box" evidence="28">
    <location>
        <begin position="168"/>
        <end position="187"/>
    </location>
</feature>
<feature type="compositionally biased region" description="Polar residues" evidence="4">
    <location>
        <begin position="1"/>
        <end position="10"/>
    </location>
</feature>
<feature type="binding site" evidence="10 20 28 42 50 60">
    <location>
        <position position="86"/>
    </location>
    <ligand>
        <name>Zn(2+)</name>
        <dbReference type="ChEBI" id="CHEBI:29105"/>
        <label>1</label>
    </ligand>
</feature>
<feature type="binding site" evidence="10 20 28 42 50 60">
    <location>
        <position position="89"/>
    </location>
    <ligand>
        <name>Zn(2+)</name>
        <dbReference type="ChEBI" id="CHEBI:29105"/>
        <label>1</label>
    </ligand>
</feature>
<feature type="binding site" evidence="10 20 28 42 50 60">
    <location>
        <position position="103"/>
    </location>
    <ligand>
        <name>Zn(2+)</name>
        <dbReference type="ChEBI" id="CHEBI:29105"/>
        <label>1</label>
    </ligand>
</feature>
<feature type="binding site" evidence="10 20 28 42 50 60">
    <location>
        <position position="106"/>
    </location>
    <ligand>
        <name>Zn(2+)</name>
        <dbReference type="ChEBI" id="CHEBI:29105"/>
        <label>1</label>
    </ligand>
</feature>
<feature type="binding site" evidence="10 20 42 50">
    <location>
        <position position="122"/>
    </location>
    <ligand>
        <name>Zn(2+)</name>
        <dbReference type="ChEBI" id="CHEBI:29105"/>
        <label>2</label>
    </ligand>
</feature>
<feature type="binding site" evidence="10 20 42 50">
    <location>
        <position position="128"/>
    </location>
    <ligand>
        <name>Zn(2+)</name>
        <dbReference type="ChEBI" id="CHEBI:29105"/>
        <label>2</label>
    </ligand>
</feature>
<feature type="binding site" evidence="10 20 42 50">
    <location>
        <position position="138"/>
    </location>
    <ligand>
        <name>Zn(2+)</name>
        <dbReference type="ChEBI" id="CHEBI:29105"/>
        <label>2</label>
    </ligand>
</feature>
<feature type="binding site" evidence="10 20 42 50">
    <location>
        <position position="141"/>
    </location>
    <ligand>
        <name>Zn(2+)</name>
        <dbReference type="ChEBI" id="CHEBI:29105"/>
        <label>2</label>
    </ligand>
</feature>
<feature type="binding site" evidence="9 14 15 17 18 41 43 44 48 49">
    <location>
        <begin position="421"/>
        <end position="424"/>
    </location>
    <ligand>
        <name>a phospholipid derivative</name>
        <dbReference type="ChEBI" id="CHEBI:16247"/>
    </ligand>
</feature>
<feature type="binding site" evidence="9 14 15 17 18 41 43 44 48 49">
    <location>
        <position position="516"/>
    </location>
    <ligand>
        <name>a phospholipid derivative</name>
        <dbReference type="ChEBI" id="CHEBI:16247"/>
    </ligand>
</feature>
<feature type="binding site" evidence="9 14 15 17 18 41 43 44 48 49">
    <location>
        <position position="520"/>
    </location>
    <ligand>
        <name>a phospholipid derivative</name>
        <dbReference type="ChEBI" id="CHEBI:16247"/>
    </ligand>
</feature>
<feature type="cross-link" description="Glycyl lysine isopeptide (Lys-Gly) (interchain with G-Cter in SUMO1)" evidence="12">
    <location>
        <position position="270"/>
    </location>
</feature>
<feature type="splice variant" id="VSP_054548" description="In isoform 4." evidence="32">
    <location>
        <begin position="1"/>
        <end position="72"/>
    </location>
</feature>
<feature type="splice variant" id="VSP_003716" description="In isoform 1." evidence="30 34 35">
    <location>
        <begin position="22"/>
        <end position="67"/>
    </location>
</feature>
<feature type="splice variant" id="VSP_003717" description="In isoform 3." evidence="30">
    <location>
        <begin position="199"/>
        <end position="370"/>
    </location>
</feature>
<feature type="mutagenesis site" description="Slightly reduced DNA binding. Strongly reduced transactivation; when associated with A-168 and A-172." evidence="10">
    <original>Y</original>
    <variation>A</variation>
    <location>
        <position position="96"/>
    </location>
</feature>
<feature type="mutagenesis site" description="Increased ability to activate transcription of target genes." evidence="24">
    <original>S</original>
    <variation>R</variation>
    <location>
        <position position="148"/>
    </location>
</feature>
<feature type="mutagenesis site" description="Strongly reduced nucleosome-binding. Slightly reduced DNA-binding." evidence="28">
    <original>D</original>
    <variation>A</variation>
    <location>
        <position position="159"/>
    </location>
</feature>
<feature type="mutagenesis site" description="Decreased DNA-binding to target genes." evidence="20">
    <original>RMR</original>
    <variation>GMP</variation>
    <location>
        <begin position="160"/>
        <end position="162"/>
    </location>
</feature>
<feature type="mutagenesis site" description="Slightly reduced DNA- and nucleosome-binding." evidence="28">
    <original>R</original>
    <variation>A</variation>
    <location>
        <position position="162"/>
    </location>
</feature>
<feature type="mutagenesis site" description="Slightly reduced DNA binding. Strongly reduced transactivation; when associated with A-96 and A-172." evidence="10">
    <original>F</original>
    <variation>A</variation>
    <location>
        <position position="168"/>
    </location>
</feature>
<feature type="mutagenesis site" description="Reduced DNA binding. Loss of transactivation." evidence="10">
    <original>GP</original>
    <variation>VA</variation>
    <location>
        <begin position="169"/>
        <end position="170"/>
    </location>
</feature>
<feature type="mutagenesis site" description="Slightly reduced DNA binding. Strongly reduced transactivation; when associated with A-96 and A-168." evidence="10">
    <original>Y</original>
    <variation>A</variation>
    <location>
        <position position="172"/>
    </location>
</feature>
<feature type="mutagenesis site" description="Increased ability to activate transcription of target genes." evidence="24">
    <original>R</original>
    <variation>D</variation>
    <location>
        <position position="174"/>
    </location>
</feature>
<feature type="mutagenesis site" description="Increased ability to activate transcription of target genes." evidence="24">
    <original>KQQKK</original>
    <variation>AQQAA</variation>
    <location>
        <begin position="179"/>
        <end position="183"/>
    </location>
</feature>
<feature type="mutagenesis site" description="Impaired ability to act as an anti-inflammatory role during the hepatic acute phase response." evidence="12">
    <original>K</original>
    <variation>R</variation>
    <location>
        <position position="270"/>
    </location>
</feature>
<feature type="mutagenesis site" description="Decreased interaction with PPARGC1A; decreased ability to increase transcription of target genes." evidence="24">
    <original>D</original>
    <variation>R</variation>
    <location>
        <position position="314"/>
    </location>
</feature>
<feature type="mutagenesis site" description="Does not affect interaction with PPARGC1A; does not affect ability to increase transcription of target genes." evidence="24">
    <original>A</original>
    <variation>R</variation>
    <location>
        <position position="324"/>
    </location>
</feature>
<feature type="mutagenesis site" description="Reduced phospholipid binding. Strongly reduced transactivation; when associated with W-416." evidence="8">
    <original>F</original>
    <variation>W</variation>
    <location>
        <position position="342"/>
    </location>
</feature>
<feature type="mutagenesis site" description="Reduced activation by the synthetic agonists RR-RJW100 and GSK8470." evidence="19">
    <original>T</original>
    <variation>V</variation>
    <location>
        <position position="352"/>
    </location>
</feature>
<feature type="mutagenesis site" description="Reduced activation by the synthetic agonist GSK8470 without affecting activation by the synthetic agonist RR-RJW100." evidence="19">
    <original>H</original>
    <variation>A</variation>
    <location>
        <position position="390"/>
    </location>
</feature>
<feature type="mutagenesis site" description="Decreased ability to activate transcription." evidence="15">
    <original>G</original>
    <variation>A</variation>
    <location>
        <position position="398"/>
    </location>
</feature>
<feature type="mutagenesis site" description="Reduced phospholipid binding. Strongly reduced transactivation; when associated with W-342." evidence="8">
    <original>I</original>
    <variation>W</variation>
    <location>
        <position position="416"/>
    </location>
</feature>
<feature type="mutagenesis site" description="Decreased ability to activate transcription." evidence="15">
    <original>G</original>
    <variation>A</variation>
    <location>
        <position position="421"/>
    </location>
</feature>
<feature type="sequence conflict" description="In Ref. 9; AAD03155." evidence="37" ref="9">
    <original>PP</original>
    <variation>L</variation>
    <location>
        <begin position="250"/>
        <end position="251"/>
    </location>
</feature>
<feature type="sequence conflict" description="In Ref. 9; AAD03155." evidence="37" ref="9">
    <original>L</original>
    <variation>V</variation>
    <location>
        <position position="353"/>
    </location>
</feature>
<feature type="turn" evidence="62">
    <location>
        <begin position="87"/>
        <end position="89"/>
    </location>
</feature>
<feature type="strand" evidence="62">
    <location>
        <begin position="95"/>
        <end position="97"/>
    </location>
</feature>
<feature type="strand" evidence="62">
    <location>
        <begin position="100"/>
        <end position="102"/>
    </location>
</feature>
<feature type="helix" evidence="62">
    <location>
        <begin position="104"/>
        <end position="115"/>
    </location>
</feature>
<feature type="turn" evidence="62">
    <location>
        <begin position="132"/>
        <end position="137"/>
    </location>
</feature>
<feature type="helix" evidence="62">
    <location>
        <begin position="139"/>
        <end position="148"/>
    </location>
</feature>
<feature type="helix" evidence="62">
    <location>
        <begin position="153"/>
        <end position="155"/>
    </location>
</feature>
<feature type="turn" evidence="62">
    <location>
        <begin position="167"/>
        <end position="170"/>
    </location>
</feature>
<feature type="helix" evidence="62">
    <location>
        <begin position="171"/>
        <end position="175"/>
    </location>
</feature>
<feature type="helix" evidence="64">
    <location>
        <begin position="303"/>
        <end position="310"/>
    </location>
</feature>
<feature type="helix" evidence="64">
    <location>
        <begin position="315"/>
        <end position="332"/>
    </location>
</feature>
<feature type="helix" evidence="61">
    <location>
        <begin position="335"/>
        <end position="337"/>
    </location>
</feature>
<feature type="helix" evidence="64">
    <location>
        <begin position="341"/>
        <end position="361"/>
    </location>
</feature>
<feature type="helix" evidence="64">
    <location>
        <begin position="366"/>
        <end position="368"/>
    </location>
</feature>
<feature type="helix" evidence="64">
    <location>
        <begin position="371"/>
        <end position="397"/>
    </location>
</feature>
<feature type="strand" evidence="64">
    <location>
        <begin position="402"/>
        <end position="404"/>
    </location>
</feature>
<feature type="strand" evidence="64">
    <location>
        <begin position="410"/>
        <end position="412"/>
    </location>
</feature>
<feature type="helix" evidence="64">
    <location>
        <begin position="413"/>
        <end position="440"/>
    </location>
</feature>
<feature type="helix" evidence="64">
    <location>
        <begin position="445"/>
        <end position="456"/>
    </location>
</feature>
<feature type="helix" evidence="64">
    <location>
        <begin position="467"/>
        <end position="488"/>
    </location>
</feature>
<feature type="strand" evidence="65">
    <location>
        <begin position="490"/>
        <end position="492"/>
    </location>
</feature>
<feature type="helix" evidence="64">
    <location>
        <begin position="495"/>
        <end position="522"/>
    </location>
</feature>
<feature type="strand" evidence="63">
    <location>
        <begin position="528"/>
        <end position="530"/>
    </location>
</feature>
<feature type="helix" evidence="64">
    <location>
        <begin position="531"/>
        <end position="537"/>
    </location>
</feature>
<proteinExistence type="evidence at protein level"/>
<gene>
    <name evidence="31 38" type="primary">NR5A2</name>
    <name evidence="35" type="synonym">B1F</name>
    <name evidence="30" type="synonym">CPF</name>
    <name evidence="36" type="synonym">FTF</name>
</gene>
<protein>
    <recommendedName>
        <fullName evidence="37">Nuclear receptor subfamily 5 group A member 2</fullName>
    </recommendedName>
    <alternativeName>
        <fullName evidence="36">Alpha-1-fetoprotein transcription factor</fullName>
    </alternativeName>
    <alternativeName>
        <fullName evidence="35">B1-binding factor</fullName>
        <shortName evidence="35">hB1F</shortName>
    </alternativeName>
    <alternativeName>
        <fullName evidence="30">CYP7A promoter-binding factor</fullName>
    </alternativeName>
    <alternativeName>
        <fullName evidence="35">Hepatocytic transcription factor</fullName>
    </alternativeName>
    <alternativeName>
        <fullName evidence="33">Liver receptor homolog 1</fullName>
        <shortName evidence="33">LRH-1</shortName>
    </alternativeName>
</protein>
<accession>O00482</accession>
<accession>B4E2P3</accession>
<accession>O95642</accession>
<accession>Q147U3</accession>